<organism>
    <name type="scientific">Homo sapiens</name>
    <name type="common">Human</name>
    <dbReference type="NCBI Taxonomy" id="9606"/>
    <lineage>
        <taxon>Eukaryota</taxon>
        <taxon>Metazoa</taxon>
        <taxon>Chordata</taxon>
        <taxon>Craniata</taxon>
        <taxon>Vertebrata</taxon>
        <taxon>Euteleostomi</taxon>
        <taxon>Mammalia</taxon>
        <taxon>Eutheria</taxon>
        <taxon>Euarchontoglires</taxon>
        <taxon>Primates</taxon>
        <taxon>Haplorrhini</taxon>
        <taxon>Catarrhini</taxon>
        <taxon>Hominidae</taxon>
        <taxon>Homo</taxon>
    </lineage>
</organism>
<name>FGFR4_HUMAN</name>
<protein>
    <recommendedName>
        <fullName>Fibroblast growth factor receptor 4</fullName>
        <shortName>FGFR-4</shortName>
        <ecNumber>2.7.10.1</ecNumber>
    </recommendedName>
    <cdAntigenName>CD334</cdAntigenName>
</protein>
<dbReference type="EC" id="2.7.10.1"/>
<dbReference type="EMBL" id="X57205">
    <property type="protein sequence ID" value="CAA40490.1"/>
    <property type="molecule type" value="mRNA"/>
</dbReference>
<dbReference type="EMBL" id="L03840">
    <property type="protein sequence ID" value="AAB59389.1"/>
    <property type="molecule type" value="mRNA"/>
</dbReference>
<dbReference type="EMBL" id="AF202063">
    <property type="protein sequence ID" value="AAF27432.1"/>
    <property type="molecule type" value="mRNA"/>
</dbReference>
<dbReference type="EMBL" id="Y13901">
    <property type="protein sequence ID" value="CAA74200.1"/>
    <property type="molecule type" value="Genomic_DNA"/>
</dbReference>
<dbReference type="EMBL" id="AF359246">
    <property type="protein sequence ID" value="AAK51435.1"/>
    <property type="molecule type" value="mRNA"/>
</dbReference>
<dbReference type="EMBL" id="JN007471">
    <property type="protein sequence ID" value="AEO19712.1"/>
    <property type="molecule type" value="mRNA"/>
</dbReference>
<dbReference type="EMBL" id="JN007472">
    <property type="protein sequence ID" value="AEO19713.1"/>
    <property type="molecule type" value="mRNA"/>
</dbReference>
<dbReference type="EMBL" id="JN007473">
    <property type="protein sequence ID" value="AEO19714.1"/>
    <property type="molecule type" value="mRNA"/>
</dbReference>
<dbReference type="EMBL" id="JN007474">
    <property type="protein sequence ID" value="AEO19715.1"/>
    <property type="molecule type" value="mRNA"/>
</dbReference>
<dbReference type="EMBL" id="JN007475">
    <property type="protein sequence ID" value="AEO19716.1"/>
    <property type="molecule type" value="mRNA"/>
</dbReference>
<dbReference type="EMBL" id="JN007476">
    <property type="protein sequence ID" value="AEO19717.1"/>
    <property type="molecule type" value="mRNA"/>
</dbReference>
<dbReference type="EMBL" id="JN007477">
    <property type="protein sequence ID" value="AEO19718.1"/>
    <property type="molecule type" value="mRNA"/>
</dbReference>
<dbReference type="EMBL" id="JN007478">
    <property type="protein sequence ID" value="AEO19719.1"/>
    <property type="molecule type" value="mRNA"/>
</dbReference>
<dbReference type="EMBL" id="JN007479">
    <property type="protein sequence ID" value="AEO19720.1"/>
    <property type="molecule type" value="mRNA"/>
</dbReference>
<dbReference type="EMBL" id="JN007480">
    <property type="protein sequence ID" value="AEO19721.1"/>
    <property type="molecule type" value="mRNA"/>
</dbReference>
<dbReference type="EMBL" id="JN007481">
    <property type="protein sequence ID" value="AEO19722.1"/>
    <property type="molecule type" value="mRNA"/>
</dbReference>
<dbReference type="EMBL" id="JN007482">
    <property type="protein sequence ID" value="AEO19723.1"/>
    <property type="molecule type" value="mRNA"/>
</dbReference>
<dbReference type="EMBL" id="AF487555">
    <property type="protein sequence ID" value="AAM13666.1"/>
    <property type="molecule type" value="Genomic_DNA"/>
</dbReference>
<dbReference type="EMBL" id="EF571596">
    <property type="protein sequence ID" value="ABQ01235.1"/>
    <property type="molecule type" value="Genomic_DNA"/>
</dbReference>
<dbReference type="EMBL" id="AC027314">
    <property type="status" value="NOT_ANNOTATED_CDS"/>
    <property type="molecule type" value="Genomic_DNA"/>
</dbReference>
<dbReference type="EMBL" id="CH471195">
    <property type="protein sequence ID" value="EAW85036.1"/>
    <property type="molecule type" value="Genomic_DNA"/>
</dbReference>
<dbReference type="EMBL" id="BC011847">
    <property type="protein sequence ID" value="AAH11847.1"/>
    <property type="molecule type" value="mRNA"/>
</dbReference>
<dbReference type="EMBL" id="M59373">
    <property type="protein sequence ID" value="AAA63208.1"/>
    <property type="molecule type" value="mRNA"/>
</dbReference>
<dbReference type="CCDS" id="CCDS4410.1">
    <molecule id="P22455-1"/>
</dbReference>
<dbReference type="CCDS" id="CCDS4411.1">
    <molecule id="P22455-2"/>
</dbReference>
<dbReference type="PIR" id="S15345">
    <property type="entry name" value="TVHUF4"/>
</dbReference>
<dbReference type="RefSeq" id="NP_001278909.1">
    <property type="nucleotide sequence ID" value="NM_001291980.1"/>
</dbReference>
<dbReference type="RefSeq" id="NP_001341913.1">
    <molecule id="P22455-1"/>
    <property type="nucleotide sequence ID" value="NM_001354984.2"/>
</dbReference>
<dbReference type="RefSeq" id="NP_002002.3">
    <molecule id="P22455-1"/>
    <property type="nucleotide sequence ID" value="NM_002011.4"/>
</dbReference>
<dbReference type="RefSeq" id="NP_075252.2">
    <molecule id="P22455-2"/>
    <property type="nucleotide sequence ID" value="NM_022963.3"/>
</dbReference>
<dbReference type="RefSeq" id="NP_998812.1">
    <molecule id="P22455-1"/>
    <property type="nucleotide sequence ID" value="NM_213647.3"/>
</dbReference>
<dbReference type="RefSeq" id="XP_005265895.1">
    <property type="nucleotide sequence ID" value="XM_005265838.3"/>
</dbReference>
<dbReference type="PDB" id="4QQ5">
    <property type="method" value="X-ray"/>
    <property type="resolution" value="2.20 A"/>
    <property type="chains" value="A=445-753"/>
</dbReference>
<dbReference type="PDB" id="4QQC">
    <property type="method" value="X-ray"/>
    <property type="resolution" value="2.40 A"/>
    <property type="chains" value="A=445-753"/>
</dbReference>
<dbReference type="PDB" id="4QQJ">
    <property type="method" value="X-ray"/>
    <property type="resolution" value="1.68 A"/>
    <property type="chains" value="A=445-753"/>
</dbReference>
<dbReference type="PDB" id="4QQT">
    <property type="method" value="X-ray"/>
    <property type="resolution" value="1.50 A"/>
    <property type="chains" value="A=445-753"/>
</dbReference>
<dbReference type="PDB" id="4QRC">
    <property type="method" value="X-ray"/>
    <property type="resolution" value="1.90 A"/>
    <property type="chains" value="A=445-753"/>
</dbReference>
<dbReference type="PDB" id="4R6V">
    <property type="method" value="X-ray"/>
    <property type="resolution" value="2.35 A"/>
    <property type="chains" value="A=445-753"/>
</dbReference>
<dbReference type="PDB" id="4TYE">
    <property type="method" value="X-ray"/>
    <property type="resolution" value="2.80 A"/>
    <property type="chains" value="A=447-753"/>
</dbReference>
<dbReference type="PDB" id="4TYG">
    <property type="method" value="X-ray"/>
    <property type="resolution" value="2.40 A"/>
    <property type="chains" value="A=447-753"/>
</dbReference>
<dbReference type="PDB" id="4TYI">
    <property type="method" value="X-ray"/>
    <property type="resolution" value="3.40 A"/>
    <property type="chains" value="A=447-753"/>
</dbReference>
<dbReference type="PDB" id="4TYJ">
    <property type="method" value="X-ray"/>
    <property type="resolution" value="2.45 A"/>
    <property type="chains" value="A=447-753"/>
</dbReference>
<dbReference type="PDB" id="4UXQ">
    <property type="method" value="X-ray"/>
    <property type="resolution" value="1.85 A"/>
    <property type="chains" value="A=447-753"/>
</dbReference>
<dbReference type="PDB" id="4XCU">
    <property type="method" value="X-ray"/>
    <property type="resolution" value="1.71 A"/>
    <property type="chains" value="A=449-751"/>
</dbReference>
<dbReference type="PDB" id="5JKG">
    <property type="method" value="X-ray"/>
    <property type="resolution" value="2.35 A"/>
    <property type="chains" value="A=445-753"/>
</dbReference>
<dbReference type="PDB" id="5NUD">
    <property type="method" value="X-ray"/>
    <property type="resolution" value="2.50 A"/>
    <property type="chains" value="A/B=449-753"/>
</dbReference>
<dbReference type="PDB" id="5NWZ">
    <property type="method" value="X-ray"/>
    <property type="resolution" value="2.37 A"/>
    <property type="chains" value="A/B=449-753"/>
</dbReference>
<dbReference type="PDB" id="5XFF">
    <property type="method" value="X-ray"/>
    <property type="resolution" value="2.70 A"/>
    <property type="chains" value="A=445-753"/>
</dbReference>
<dbReference type="PDB" id="5XFJ">
    <property type="method" value="X-ray"/>
    <property type="resolution" value="3.25 A"/>
    <property type="chains" value="A=445-753"/>
</dbReference>
<dbReference type="PDB" id="6IUO">
    <property type="method" value="X-ray"/>
    <property type="resolution" value="2.30 A"/>
    <property type="chains" value="A=445-753"/>
</dbReference>
<dbReference type="PDB" id="6IUP">
    <property type="method" value="X-ray"/>
    <property type="resolution" value="2.00 A"/>
    <property type="chains" value="A=445-753"/>
</dbReference>
<dbReference type="PDB" id="6J6Y">
    <property type="method" value="X-ray"/>
    <property type="resolution" value="2.15 A"/>
    <property type="chains" value="A/D=141-244"/>
</dbReference>
<dbReference type="PDB" id="6JPE">
    <property type="method" value="X-ray"/>
    <property type="resolution" value="1.60 A"/>
    <property type="chains" value="A=445-753"/>
</dbReference>
<dbReference type="PDB" id="6JPJ">
    <property type="method" value="X-ray"/>
    <property type="resolution" value="2.64 A"/>
    <property type="chains" value="A=445-753"/>
</dbReference>
<dbReference type="PDB" id="6NVG">
    <property type="method" value="X-ray"/>
    <property type="resolution" value="1.99 A"/>
    <property type="chains" value="A=450-751"/>
</dbReference>
<dbReference type="PDB" id="6NVH">
    <property type="method" value="X-ray"/>
    <property type="resolution" value="1.90 A"/>
    <property type="chains" value="A=450-751"/>
</dbReference>
<dbReference type="PDB" id="6NVI">
    <property type="method" value="X-ray"/>
    <property type="resolution" value="2.12 A"/>
    <property type="chains" value="A=450-751"/>
</dbReference>
<dbReference type="PDB" id="6NVJ">
    <property type="method" value="X-ray"/>
    <property type="resolution" value="2.30 A"/>
    <property type="chains" value="A=450-751"/>
</dbReference>
<dbReference type="PDB" id="6NVK">
    <property type="method" value="X-ray"/>
    <property type="resolution" value="2.30 A"/>
    <property type="chains" value="A=450-751"/>
</dbReference>
<dbReference type="PDB" id="6V9C">
    <property type="method" value="X-ray"/>
    <property type="resolution" value="1.90 A"/>
    <property type="chains" value="A=449-751"/>
</dbReference>
<dbReference type="PDB" id="6YI8">
    <property type="method" value="X-ray"/>
    <property type="resolution" value="2.13 A"/>
    <property type="chains" value="A/B=447-753"/>
</dbReference>
<dbReference type="PDB" id="7DTZ">
    <property type="method" value="X-ray"/>
    <property type="resolution" value="2.01 A"/>
    <property type="chains" value="A=445-753"/>
</dbReference>
<dbReference type="PDB" id="7F3M">
    <property type="method" value="X-ray"/>
    <property type="resolution" value="2.29 A"/>
    <property type="chains" value="A=445-753"/>
</dbReference>
<dbReference type="PDB" id="7N1J">
    <property type="method" value="X-ray"/>
    <property type="resolution" value="2.99 A"/>
    <property type="chains" value="A/C=245-355"/>
</dbReference>
<dbReference type="PDB" id="7TYD">
    <property type="method" value="X-ray"/>
    <property type="resolution" value="2.86 A"/>
    <property type="chains" value="A/C=245-355"/>
</dbReference>
<dbReference type="PDB" id="7V29">
    <property type="method" value="X-ray"/>
    <property type="resolution" value="1.98 A"/>
    <property type="chains" value="A/B=445-753"/>
</dbReference>
<dbReference type="PDB" id="7VJL">
    <property type="method" value="X-ray"/>
    <property type="resolution" value="2.90 A"/>
    <property type="chains" value="A/B=453-753"/>
</dbReference>
<dbReference type="PDB" id="7WCT">
    <property type="method" value="X-ray"/>
    <property type="resolution" value="2.11 A"/>
    <property type="chains" value="A=445-753"/>
</dbReference>
<dbReference type="PDB" id="7WCW">
    <property type="method" value="X-ray"/>
    <property type="resolution" value="2.32 A"/>
    <property type="chains" value="A=445-753"/>
</dbReference>
<dbReference type="PDB" id="7WCX">
    <property type="method" value="X-ray"/>
    <property type="resolution" value="2.17 A"/>
    <property type="chains" value="A=445-753"/>
</dbReference>
<dbReference type="PDB" id="7YBO">
    <property type="method" value="X-ray"/>
    <property type="resolution" value="2.31 A"/>
    <property type="chains" value="A=445-753"/>
</dbReference>
<dbReference type="PDB" id="7YBP">
    <property type="method" value="X-ray"/>
    <property type="resolution" value="2.24 A"/>
    <property type="chains" value="A=445-753"/>
</dbReference>
<dbReference type="PDB" id="7YBX">
    <property type="method" value="X-ray"/>
    <property type="resolution" value="2.23 A"/>
    <property type="chains" value="A=445-753"/>
</dbReference>
<dbReference type="PDB" id="7YC1">
    <property type="method" value="X-ray"/>
    <property type="resolution" value="2.54 A"/>
    <property type="chains" value="A=445-753"/>
</dbReference>
<dbReference type="PDB" id="7YC3">
    <property type="method" value="X-ray"/>
    <property type="resolution" value="1.99 A"/>
    <property type="chains" value="A=445-753"/>
</dbReference>
<dbReference type="PDB" id="7YSW">
    <property type="method" value="EM"/>
    <property type="resolution" value="3.03 A"/>
    <property type="chains" value="C/E=142-354"/>
</dbReference>
<dbReference type="PDB" id="8KH6">
    <property type="method" value="X-ray"/>
    <property type="resolution" value="1.62 A"/>
    <property type="chains" value="A=445-753"/>
</dbReference>
<dbReference type="PDB" id="8KH7">
    <property type="method" value="X-ray"/>
    <property type="resolution" value="1.52 A"/>
    <property type="chains" value="A=445-753"/>
</dbReference>
<dbReference type="PDB" id="8KH8">
    <property type="method" value="X-ray"/>
    <property type="resolution" value="1.49 A"/>
    <property type="chains" value="A=445-753"/>
</dbReference>
<dbReference type="PDB" id="8KH9">
    <property type="method" value="X-ray"/>
    <property type="resolution" value="1.42 A"/>
    <property type="chains" value="A=454-753"/>
</dbReference>
<dbReference type="PDB" id="8W5C">
    <property type="method" value="X-ray"/>
    <property type="resolution" value="2.30 A"/>
    <property type="chains" value="A/B=453-752"/>
</dbReference>
<dbReference type="PDB" id="8XLQ">
    <property type="method" value="X-ray"/>
    <property type="resolution" value="1.95 A"/>
    <property type="chains" value="A=445-753"/>
</dbReference>
<dbReference type="PDBsum" id="4QQ5"/>
<dbReference type="PDBsum" id="4QQC"/>
<dbReference type="PDBsum" id="4QQJ"/>
<dbReference type="PDBsum" id="4QQT"/>
<dbReference type="PDBsum" id="4QRC"/>
<dbReference type="PDBsum" id="4R6V"/>
<dbReference type="PDBsum" id="4TYE"/>
<dbReference type="PDBsum" id="4TYG"/>
<dbReference type="PDBsum" id="4TYI"/>
<dbReference type="PDBsum" id="4TYJ"/>
<dbReference type="PDBsum" id="4UXQ"/>
<dbReference type="PDBsum" id="4XCU"/>
<dbReference type="PDBsum" id="5JKG"/>
<dbReference type="PDBsum" id="5NUD"/>
<dbReference type="PDBsum" id="5NWZ"/>
<dbReference type="PDBsum" id="5XFF"/>
<dbReference type="PDBsum" id="5XFJ"/>
<dbReference type="PDBsum" id="6IUO"/>
<dbReference type="PDBsum" id="6IUP"/>
<dbReference type="PDBsum" id="6J6Y"/>
<dbReference type="PDBsum" id="6JPE"/>
<dbReference type="PDBsum" id="6JPJ"/>
<dbReference type="PDBsum" id="6NVG"/>
<dbReference type="PDBsum" id="6NVH"/>
<dbReference type="PDBsum" id="6NVI"/>
<dbReference type="PDBsum" id="6NVJ"/>
<dbReference type="PDBsum" id="6NVK"/>
<dbReference type="PDBsum" id="6V9C"/>
<dbReference type="PDBsum" id="6YI8"/>
<dbReference type="PDBsum" id="7DTZ"/>
<dbReference type="PDBsum" id="7F3M"/>
<dbReference type="PDBsum" id="7N1J"/>
<dbReference type="PDBsum" id="7TYD"/>
<dbReference type="PDBsum" id="7V29"/>
<dbReference type="PDBsum" id="7VJL"/>
<dbReference type="PDBsum" id="7WCT"/>
<dbReference type="PDBsum" id="7WCW"/>
<dbReference type="PDBsum" id="7WCX"/>
<dbReference type="PDBsum" id="7YBO"/>
<dbReference type="PDBsum" id="7YBP"/>
<dbReference type="PDBsum" id="7YBX"/>
<dbReference type="PDBsum" id="7YC1"/>
<dbReference type="PDBsum" id="7YC3"/>
<dbReference type="PDBsum" id="7YSW"/>
<dbReference type="PDBsum" id="8KH6"/>
<dbReference type="PDBsum" id="8KH7"/>
<dbReference type="PDBsum" id="8KH8"/>
<dbReference type="PDBsum" id="8KH9"/>
<dbReference type="PDBsum" id="8W5C"/>
<dbReference type="PDBsum" id="8XLQ"/>
<dbReference type="EMDB" id="EMD-34084"/>
<dbReference type="SMR" id="P22455"/>
<dbReference type="BioGRID" id="108555">
    <property type="interactions" value="518"/>
</dbReference>
<dbReference type="CORUM" id="P22455"/>
<dbReference type="DIP" id="DIP-5149N"/>
<dbReference type="FunCoup" id="P22455">
    <property type="interactions" value="1427"/>
</dbReference>
<dbReference type="IntAct" id="P22455">
    <property type="interactions" value="396"/>
</dbReference>
<dbReference type="MINT" id="P22455"/>
<dbReference type="STRING" id="9606.ENSP00000292408"/>
<dbReference type="BindingDB" id="P22455"/>
<dbReference type="ChEMBL" id="CHEMBL3973"/>
<dbReference type="DrugBank" id="DB12147">
    <property type="generic name" value="Erdafitinib"/>
</dbReference>
<dbReference type="DrugBank" id="DB16167">
    <property type="generic name" value="Fisogatinib"/>
</dbReference>
<dbReference type="DrugBank" id="DB15149">
    <property type="generic name" value="Futibatinib"/>
</dbReference>
<dbReference type="DrugBank" id="DB15169">
    <property type="generic name" value="H3B-6527"/>
</dbReference>
<dbReference type="DrugBank" id="DB01109">
    <property type="generic name" value="Heparin"/>
</dbReference>
<dbReference type="DrugBank" id="DB11886">
    <property type="generic name" value="Infigratinib"/>
</dbReference>
<dbReference type="DrugBank" id="DB09078">
    <property type="generic name" value="Lenvatinib"/>
</dbReference>
<dbReference type="DrugBank" id="DB15102">
    <property type="generic name" value="Pemigatinib"/>
</dbReference>
<dbReference type="DrugBank" id="DB08901">
    <property type="generic name" value="Ponatinib"/>
</dbReference>
<dbReference type="DrugBank" id="DB16845">
    <property type="generic name" value="Roblitinib"/>
</dbReference>
<dbReference type="DrugCentral" id="P22455"/>
<dbReference type="GuidetoPHARMACOLOGY" id="1811"/>
<dbReference type="TCDB" id="8.A.23.1.9">
    <property type="family name" value="the basigin (basigin) family"/>
</dbReference>
<dbReference type="GlyConnect" id="1938">
    <property type="glycosylation" value="7 N-Linked glycans (4 sites)"/>
</dbReference>
<dbReference type="GlyCosmos" id="P22455">
    <property type="glycosylation" value="8 sites, 8 glycans"/>
</dbReference>
<dbReference type="GlyGen" id="P22455">
    <property type="glycosylation" value="8 sites, 9 N-linked glycans (5 sites), 1 O-linked glycan (1 site)"/>
</dbReference>
<dbReference type="iPTMnet" id="P22455"/>
<dbReference type="PhosphoSitePlus" id="P22455"/>
<dbReference type="SwissPalm" id="P22455"/>
<dbReference type="BioMuta" id="FGFR4"/>
<dbReference type="DMDM" id="13432140"/>
<dbReference type="CPTAC" id="CPTAC-1768"/>
<dbReference type="CPTAC" id="CPTAC-3178"/>
<dbReference type="CPTAC" id="CPTAC-3179"/>
<dbReference type="jPOST" id="P22455"/>
<dbReference type="MassIVE" id="P22455"/>
<dbReference type="PaxDb" id="9606-ENSP00000292408"/>
<dbReference type="PeptideAtlas" id="P22455"/>
<dbReference type="ProteomicsDB" id="53990">
    <molecule id="P22455-1"/>
</dbReference>
<dbReference type="ProteomicsDB" id="53991">
    <molecule id="P22455-2"/>
</dbReference>
<dbReference type="ABCD" id="P22455">
    <property type="antibodies" value="1 sequenced antibody"/>
</dbReference>
<dbReference type="Antibodypedia" id="3922">
    <property type="antibodies" value="888 antibodies from 47 providers"/>
</dbReference>
<dbReference type="DNASU" id="2264"/>
<dbReference type="Ensembl" id="ENST00000292408.9">
    <molecule id="P22455-1"/>
    <property type="protein sequence ID" value="ENSP00000292408.4"/>
    <property type="gene ID" value="ENSG00000160867.15"/>
</dbReference>
<dbReference type="Ensembl" id="ENST00000393637.5">
    <molecule id="P22455-2"/>
    <property type="protein sequence ID" value="ENSP00000377254.1"/>
    <property type="gene ID" value="ENSG00000160867.15"/>
</dbReference>
<dbReference type="Ensembl" id="ENST00000502906.5">
    <molecule id="P22455-1"/>
    <property type="protein sequence ID" value="ENSP00000424960.1"/>
    <property type="gene ID" value="ENSG00000160867.15"/>
</dbReference>
<dbReference type="GeneID" id="2264"/>
<dbReference type="KEGG" id="hsa:2264"/>
<dbReference type="MANE-Select" id="ENST00000292408.9">
    <property type="protein sequence ID" value="ENSP00000292408.4"/>
    <property type="RefSeq nucleotide sequence ID" value="NM_213647.3"/>
    <property type="RefSeq protein sequence ID" value="NP_998812.1"/>
</dbReference>
<dbReference type="UCSC" id="uc003mfl.4">
    <molecule id="P22455-1"/>
    <property type="organism name" value="human"/>
</dbReference>
<dbReference type="AGR" id="HGNC:3691"/>
<dbReference type="CTD" id="2264"/>
<dbReference type="DisGeNET" id="2264"/>
<dbReference type="GeneCards" id="FGFR4"/>
<dbReference type="HGNC" id="HGNC:3691">
    <property type="gene designation" value="FGFR4"/>
</dbReference>
<dbReference type="HPA" id="ENSG00000160867">
    <property type="expression patterns" value="Tissue enhanced (liver, lung)"/>
</dbReference>
<dbReference type="MalaCards" id="FGFR4"/>
<dbReference type="MIM" id="134935">
    <property type="type" value="gene"/>
</dbReference>
<dbReference type="neXtProt" id="NX_P22455"/>
<dbReference type="OpenTargets" id="ENSG00000160867"/>
<dbReference type="PharmGKB" id="PA28130"/>
<dbReference type="VEuPathDB" id="HostDB:ENSG00000160867"/>
<dbReference type="eggNOG" id="KOG0200">
    <property type="taxonomic scope" value="Eukaryota"/>
</dbReference>
<dbReference type="GeneTree" id="ENSGT00940000161469"/>
<dbReference type="HOGENOM" id="CLU_000288_74_3_1"/>
<dbReference type="InParanoid" id="P22455"/>
<dbReference type="OMA" id="WYKEGNR"/>
<dbReference type="OrthoDB" id="5984265at2759"/>
<dbReference type="PAN-GO" id="P22455">
    <property type="GO annotations" value="9 GO annotations based on evolutionary models"/>
</dbReference>
<dbReference type="PhylomeDB" id="P22455"/>
<dbReference type="TreeFam" id="TF316307"/>
<dbReference type="BRENDA" id="2.7.10.1">
    <property type="organism ID" value="2681"/>
</dbReference>
<dbReference type="PathwayCommons" id="P22455"/>
<dbReference type="Reactome" id="R-HSA-109704">
    <property type="pathway name" value="PI3K Cascade"/>
</dbReference>
<dbReference type="Reactome" id="R-HSA-1257604">
    <property type="pathway name" value="PIP3 activates AKT signaling"/>
</dbReference>
<dbReference type="Reactome" id="R-HSA-1307965">
    <property type="pathway name" value="betaKlotho-mediated ligand binding"/>
</dbReference>
<dbReference type="Reactome" id="R-HSA-1839128">
    <property type="pathway name" value="FGFR4 mutant receptor activation"/>
</dbReference>
<dbReference type="Reactome" id="R-HSA-190322">
    <property type="pathway name" value="FGFR4 ligand binding and activation"/>
</dbReference>
<dbReference type="Reactome" id="R-HSA-2219530">
    <property type="pathway name" value="Constitutive Signaling by Aberrant PI3K in Cancer"/>
</dbReference>
<dbReference type="Reactome" id="R-HSA-5654228">
    <property type="pathway name" value="Phospholipase C-mediated cascade, FGFR4"/>
</dbReference>
<dbReference type="Reactome" id="R-HSA-5654712">
    <property type="pathway name" value="FRS-mediated FGFR4 signaling"/>
</dbReference>
<dbReference type="Reactome" id="R-HSA-5654719">
    <property type="pathway name" value="SHC-mediated cascade:FGFR4"/>
</dbReference>
<dbReference type="Reactome" id="R-HSA-5654720">
    <property type="pathway name" value="PI-3K cascade:FGFR4"/>
</dbReference>
<dbReference type="Reactome" id="R-HSA-5654733">
    <property type="pathway name" value="Negative regulation of FGFR4 signaling"/>
</dbReference>
<dbReference type="Reactome" id="R-HSA-5655291">
    <property type="pathway name" value="Signaling by FGFR4 in disease"/>
</dbReference>
<dbReference type="Reactome" id="R-HSA-5673001">
    <property type="pathway name" value="RAF/MAP kinase cascade"/>
</dbReference>
<dbReference type="Reactome" id="R-HSA-6811558">
    <property type="pathway name" value="PI5P, PP2A and IER3 Regulate PI3K/AKT Signaling"/>
</dbReference>
<dbReference type="SignaLink" id="P22455"/>
<dbReference type="SIGNOR" id="P22455"/>
<dbReference type="BioGRID-ORCS" id="2264">
    <property type="hits" value="21 hits in 1192 CRISPR screens"/>
</dbReference>
<dbReference type="CD-CODE" id="91857CE7">
    <property type="entry name" value="Nucleolus"/>
</dbReference>
<dbReference type="ChiTaRS" id="FGFR4">
    <property type="organism name" value="human"/>
</dbReference>
<dbReference type="EvolutionaryTrace" id="P22455"/>
<dbReference type="GeneWiki" id="Fibroblast_growth_factor_receptor_4"/>
<dbReference type="GenomeRNAi" id="2264"/>
<dbReference type="Pharos" id="P22455">
    <property type="development level" value="Tclin"/>
</dbReference>
<dbReference type="PRO" id="PR:P22455"/>
<dbReference type="Proteomes" id="UP000005640">
    <property type="component" value="Chromosome 5"/>
</dbReference>
<dbReference type="RNAct" id="P22455">
    <property type="molecule type" value="protein"/>
</dbReference>
<dbReference type="Bgee" id="ENSG00000160867">
    <property type="expression patterns" value="Expressed in right lobe of liver and 112 other cell types or tissues"/>
</dbReference>
<dbReference type="ExpressionAtlas" id="P22455">
    <property type="expression patterns" value="baseline and differential"/>
</dbReference>
<dbReference type="GO" id="GO:0005783">
    <property type="term" value="C:endoplasmic reticulum"/>
    <property type="evidence" value="ECO:0000314"/>
    <property type="project" value="UniProtKB"/>
</dbReference>
<dbReference type="GO" id="GO:0005768">
    <property type="term" value="C:endosome"/>
    <property type="evidence" value="ECO:0007669"/>
    <property type="project" value="UniProtKB-SubCell"/>
</dbReference>
<dbReference type="GO" id="GO:0005576">
    <property type="term" value="C:extracellular region"/>
    <property type="evidence" value="ECO:0007669"/>
    <property type="project" value="UniProtKB-SubCell"/>
</dbReference>
<dbReference type="GO" id="GO:0005794">
    <property type="term" value="C:Golgi apparatus"/>
    <property type="evidence" value="ECO:0000314"/>
    <property type="project" value="UniProtKB"/>
</dbReference>
<dbReference type="GO" id="GO:0005886">
    <property type="term" value="C:plasma membrane"/>
    <property type="evidence" value="ECO:0000314"/>
    <property type="project" value="UniProtKB"/>
</dbReference>
<dbReference type="GO" id="GO:0043235">
    <property type="term" value="C:receptor complex"/>
    <property type="evidence" value="ECO:0000318"/>
    <property type="project" value="GO_Central"/>
</dbReference>
<dbReference type="GO" id="GO:0030133">
    <property type="term" value="C:transport vesicle"/>
    <property type="evidence" value="ECO:0000314"/>
    <property type="project" value="UniProtKB"/>
</dbReference>
<dbReference type="GO" id="GO:0005524">
    <property type="term" value="F:ATP binding"/>
    <property type="evidence" value="ECO:0007669"/>
    <property type="project" value="UniProtKB-KW"/>
</dbReference>
<dbReference type="GO" id="GO:0017134">
    <property type="term" value="F:fibroblast growth factor binding"/>
    <property type="evidence" value="ECO:0000314"/>
    <property type="project" value="UniProtKB"/>
</dbReference>
<dbReference type="GO" id="GO:0005007">
    <property type="term" value="F:fibroblast growth factor receptor activity"/>
    <property type="evidence" value="ECO:0000314"/>
    <property type="project" value="UniProtKB"/>
</dbReference>
<dbReference type="GO" id="GO:0008201">
    <property type="term" value="F:heparin binding"/>
    <property type="evidence" value="ECO:0000314"/>
    <property type="project" value="UniProtKB"/>
</dbReference>
<dbReference type="GO" id="GO:0016477">
    <property type="term" value="P:cell migration"/>
    <property type="evidence" value="ECO:0000315"/>
    <property type="project" value="UniProtKB"/>
</dbReference>
<dbReference type="GO" id="GO:0042632">
    <property type="term" value="P:cholesterol homeostasis"/>
    <property type="evidence" value="ECO:0000250"/>
    <property type="project" value="UniProtKB"/>
</dbReference>
<dbReference type="GO" id="GO:0008543">
    <property type="term" value="P:fibroblast growth factor receptor signaling pathway"/>
    <property type="evidence" value="ECO:0000314"/>
    <property type="project" value="UniProtKB"/>
</dbReference>
<dbReference type="GO" id="GO:0042593">
    <property type="term" value="P:glucose homeostasis"/>
    <property type="evidence" value="ECO:0000250"/>
    <property type="project" value="UniProtKB"/>
</dbReference>
<dbReference type="GO" id="GO:0018108">
    <property type="term" value="P:peptidyl-tyrosine phosphorylation"/>
    <property type="evidence" value="ECO:0000314"/>
    <property type="project" value="UniProtKB"/>
</dbReference>
<dbReference type="GO" id="GO:0055062">
    <property type="term" value="P:phosphate ion homeostasis"/>
    <property type="evidence" value="ECO:0000250"/>
    <property type="project" value="UniProtKB"/>
</dbReference>
<dbReference type="GO" id="GO:0043085">
    <property type="term" value="P:positive regulation of catalytic activity"/>
    <property type="evidence" value="ECO:0000315"/>
    <property type="project" value="UniProtKB"/>
</dbReference>
<dbReference type="GO" id="GO:0008284">
    <property type="term" value="P:positive regulation of cell population proliferation"/>
    <property type="evidence" value="ECO:0000314"/>
    <property type="project" value="UniProtKB"/>
</dbReference>
<dbReference type="GO" id="GO:2000573">
    <property type="term" value="P:positive regulation of DNA biosynthetic process"/>
    <property type="evidence" value="ECO:0000315"/>
    <property type="project" value="UniProtKB"/>
</dbReference>
<dbReference type="GO" id="GO:0070374">
    <property type="term" value="P:positive regulation of ERK1 and ERK2 cascade"/>
    <property type="evidence" value="ECO:0000315"/>
    <property type="project" value="UniProtKB"/>
</dbReference>
<dbReference type="GO" id="GO:0010628">
    <property type="term" value="P:positive regulation of gene expression"/>
    <property type="evidence" value="ECO:0000315"/>
    <property type="project" value="UniProtKB"/>
</dbReference>
<dbReference type="GO" id="GO:0045862">
    <property type="term" value="P:positive regulation of proteolysis"/>
    <property type="evidence" value="ECO:0000315"/>
    <property type="project" value="UniProtKB"/>
</dbReference>
<dbReference type="GO" id="GO:0046777">
    <property type="term" value="P:protein autophosphorylation"/>
    <property type="evidence" value="ECO:0000314"/>
    <property type="project" value="UniProtKB"/>
</dbReference>
<dbReference type="GO" id="GO:0070857">
    <property type="term" value="P:regulation of bile acid biosynthetic process"/>
    <property type="evidence" value="ECO:0000315"/>
    <property type="project" value="UniProtKB"/>
</dbReference>
<dbReference type="GO" id="GO:0010715">
    <property type="term" value="P:regulation of extracellular matrix disassembly"/>
    <property type="evidence" value="ECO:0000315"/>
    <property type="project" value="UniProtKB"/>
</dbReference>
<dbReference type="GO" id="GO:0019216">
    <property type="term" value="P:regulation of lipid metabolic process"/>
    <property type="evidence" value="ECO:0000250"/>
    <property type="project" value="UniProtKB"/>
</dbReference>
<dbReference type="CDD" id="cd05857">
    <property type="entry name" value="IgI_2_FGFR"/>
    <property type="match status" value="1"/>
</dbReference>
<dbReference type="FunFam" id="1.10.510.10:FF:000007">
    <property type="entry name" value="Fibroblast growth factor receptor"/>
    <property type="match status" value="1"/>
</dbReference>
<dbReference type="FunFam" id="2.60.40.10:FF:000016">
    <property type="entry name" value="Fibroblast growth factor receptor"/>
    <property type="match status" value="1"/>
</dbReference>
<dbReference type="FunFam" id="2.60.40.10:FF:000020">
    <property type="entry name" value="Fibroblast growth factor receptor"/>
    <property type="match status" value="1"/>
</dbReference>
<dbReference type="FunFam" id="2.60.40.10:FF:000730">
    <property type="entry name" value="Fibroblast growth factor receptor"/>
    <property type="match status" value="1"/>
</dbReference>
<dbReference type="FunFam" id="3.30.200.20:FF:000334">
    <property type="entry name" value="Fibroblast growth factor receptor"/>
    <property type="match status" value="1"/>
</dbReference>
<dbReference type="Gene3D" id="2.60.40.10">
    <property type="entry name" value="Immunoglobulins"/>
    <property type="match status" value="3"/>
</dbReference>
<dbReference type="Gene3D" id="3.30.200.20">
    <property type="entry name" value="Phosphorylase Kinase, domain 1"/>
    <property type="match status" value="1"/>
</dbReference>
<dbReference type="Gene3D" id="1.10.510.10">
    <property type="entry name" value="Transferase(Phosphotransferase) domain 1"/>
    <property type="match status" value="1"/>
</dbReference>
<dbReference type="InterPro" id="IPR016248">
    <property type="entry name" value="FGF_rcpt_fam"/>
</dbReference>
<dbReference type="InterPro" id="IPR007110">
    <property type="entry name" value="Ig-like_dom"/>
</dbReference>
<dbReference type="InterPro" id="IPR036179">
    <property type="entry name" value="Ig-like_dom_sf"/>
</dbReference>
<dbReference type="InterPro" id="IPR013783">
    <property type="entry name" value="Ig-like_fold"/>
</dbReference>
<dbReference type="InterPro" id="IPR013098">
    <property type="entry name" value="Ig_I-set"/>
</dbReference>
<dbReference type="InterPro" id="IPR003599">
    <property type="entry name" value="Ig_sub"/>
</dbReference>
<dbReference type="InterPro" id="IPR003598">
    <property type="entry name" value="Ig_sub2"/>
</dbReference>
<dbReference type="InterPro" id="IPR011009">
    <property type="entry name" value="Kinase-like_dom_sf"/>
</dbReference>
<dbReference type="InterPro" id="IPR000719">
    <property type="entry name" value="Prot_kinase_dom"/>
</dbReference>
<dbReference type="InterPro" id="IPR017441">
    <property type="entry name" value="Protein_kinase_ATP_BS"/>
</dbReference>
<dbReference type="InterPro" id="IPR050122">
    <property type="entry name" value="RTK"/>
</dbReference>
<dbReference type="InterPro" id="IPR001245">
    <property type="entry name" value="Ser-Thr/Tyr_kinase_cat_dom"/>
</dbReference>
<dbReference type="InterPro" id="IPR008266">
    <property type="entry name" value="Tyr_kinase_AS"/>
</dbReference>
<dbReference type="InterPro" id="IPR020635">
    <property type="entry name" value="Tyr_kinase_cat_dom"/>
</dbReference>
<dbReference type="PANTHER" id="PTHR24416:SF343">
    <property type="entry name" value="FIBROBLAST GROWTH FACTOR RECEPTOR 4"/>
    <property type="match status" value="1"/>
</dbReference>
<dbReference type="PANTHER" id="PTHR24416">
    <property type="entry name" value="TYROSINE-PROTEIN KINASE RECEPTOR"/>
    <property type="match status" value="1"/>
</dbReference>
<dbReference type="Pfam" id="PF07679">
    <property type="entry name" value="I-set"/>
    <property type="match status" value="1"/>
</dbReference>
<dbReference type="Pfam" id="PF13927">
    <property type="entry name" value="Ig_3"/>
    <property type="match status" value="1"/>
</dbReference>
<dbReference type="Pfam" id="PF07714">
    <property type="entry name" value="PK_Tyr_Ser-Thr"/>
    <property type="match status" value="1"/>
</dbReference>
<dbReference type="PIRSF" id="PIRSF000628">
    <property type="entry name" value="FGFR"/>
    <property type="match status" value="1"/>
</dbReference>
<dbReference type="PRINTS" id="PR00109">
    <property type="entry name" value="TYRKINASE"/>
</dbReference>
<dbReference type="SMART" id="SM00409">
    <property type="entry name" value="IG"/>
    <property type="match status" value="3"/>
</dbReference>
<dbReference type="SMART" id="SM00408">
    <property type="entry name" value="IGc2"/>
    <property type="match status" value="3"/>
</dbReference>
<dbReference type="SMART" id="SM00219">
    <property type="entry name" value="TyrKc"/>
    <property type="match status" value="1"/>
</dbReference>
<dbReference type="SUPFAM" id="SSF48726">
    <property type="entry name" value="Immunoglobulin"/>
    <property type="match status" value="3"/>
</dbReference>
<dbReference type="SUPFAM" id="SSF56112">
    <property type="entry name" value="Protein kinase-like (PK-like)"/>
    <property type="match status" value="1"/>
</dbReference>
<dbReference type="PROSITE" id="PS50835">
    <property type="entry name" value="IG_LIKE"/>
    <property type="match status" value="2"/>
</dbReference>
<dbReference type="PROSITE" id="PS00107">
    <property type="entry name" value="PROTEIN_KINASE_ATP"/>
    <property type="match status" value="1"/>
</dbReference>
<dbReference type="PROSITE" id="PS50011">
    <property type="entry name" value="PROTEIN_KINASE_DOM"/>
    <property type="match status" value="1"/>
</dbReference>
<dbReference type="PROSITE" id="PS00109">
    <property type="entry name" value="PROTEIN_KINASE_TYR"/>
    <property type="match status" value="1"/>
</dbReference>
<keyword id="KW-0002">3D-structure</keyword>
<keyword id="KW-0025">Alternative splicing</keyword>
<keyword id="KW-0067">ATP-binding</keyword>
<keyword id="KW-1003">Cell membrane</keyword>
<keyword id="KW-0903">Direct protein sequencing</keyword>
<keyword id="KW-1015">Disulfide bond</keyword>
<keyword id="KW-0256">Endoplasmic reticulum</keyword>
<keyword id="KW-0967">Endosome</keyword>
<keyword id="KW-0325">Glycoprotein</keyword>
<keyword id="KW-0393">Immunoglobulin domain</keyword>
<keyword id="KW-0418">Kinase</keyword>
<keyword id="KW-0472">Membrane</keyword>
<keyword id="KW-0547">Nucleotide-binding</keyword>
<keyword id="KW-0597">Phosphoprotein</keyword>
<keyword id="KW-1267">Proteomics identification</keyword>
<keyword id="KW-0675">Receptor</keyword>
<keyword id="KW-1185">Reference proteome</keyword>
<keyword id="KW-0677">Repeat</keyword>
<keyword id="KW-0964">Secreted</keyword>
<keyword id="KW-0732">Signal</keyword>
<keyword id="KW-0808">Transferase</keyword>
<keyword id="KW-0812">Transmembrane</keyword>
<keyword id="KW-1133">Transmembrane helix</keyword>
<keyword id="KW-0829">Tyrosine-protein kinase</keyword>
<keyword id="KW-0832">Ubl conjugation</keyword>
<evidence type="ECO:0000255" key="1"/>
<evidence type="ECO:0000255" key="2">
    <source>
        <dbReference type="PROSITE-ProRule" id="PRU00114"/>
    </source>
</evidence>
<evidence type="ECO:0000255" key="3">
    <source>
        <dbReference type="PROSITE-ProRule" id="PRU00159"/>
    </source>
</evidence>
<evidence type="ECO:0000255" key="4">
    <source>
        <dbReference type="PROSITE-ProRule" id="PRU10028"/>
    </source>
</evidence>
<evidence type="ECO:0000256" key="5">
    <source>
        <dbReference type="SAM" id="MobiDB-lite"/>
    </source>
</evidence>
<evidence type="ECO:0000269" key="6">
    <source>
    </source>
</evidence>
<evidence type="ECO:0000269" key="7">
    <source>
    </source>
</evidence>
<evidence type="ECO:0000269" key="8">
    <source>
    </source>
</evidence>
<evidence type="ECO:0000269" key="9">
    <source>
    </source>
</evidence>
<evidence type="ECO:0000269" key="10">
    <source>
    </source>
</evidence>
<evidence type="ECO:0000269" key="11">
    <source>
    </source>
</evidence>
<evidence type="ECO:0000269" key="12">
    <source>
    </source>
</evidence>
<evidence type="ECO:0000269" key="13">
    <source>
    </source>
</evidence>
<evidence type="ECO:0000269" key="14">
    <source>
    </source>
</evidence>
<evidence type="ECO:0000269" key="15">
    <source>
    </source>
</evidence>
<evidence type="ECO:0000269" key="16">
    <source>
    </source>
</evidence>
<evidence type="ECO:0000269" key="17">
    <source>
    </source>
</evidence>
<evidence type="ECO:0000269" key="18">
    <source>
    </source>
</evidence>
<evidence type="ECO:0000269" key="19">
    <source>
    </source>
</evidence>
<evidence type="ECO:0000269" key="20">
    <source>
    </source>
</evidence>
<evidence type="ECO:0000269" key="21">
    <source>
    </source>
</evidence>
<evidence type="ECO:0000269" key="22">
    <source>
    </source>
</evidence>
<evidence type="ECO:0000269" key="23">
    <source>
    </source>
</evidence>
<evidence type="ECO:0000269" key="24">
    <source>
    </source>
</evidence>
<evidence type="ECO:0000269" key="25">
    <source>
    </source>
</evidence>
<evidence type="ECO:0000269" key="26">
    <source>
    </source>
</evidence>
<evidence type="ECO:0000269" key="27">
    <source>
    </source>
</evidence>
<evidence type="ECO:0000269" key="28">
    <source>
    </source>
</evidence>
<evidence type="ECO:0000269" key="29">
    <source>
    </source>
</evidence>
<evidence type="ECO:0000269" key="30">
    <source ref="6"/>
</evidence>
<evidence type="ECO:0000269" key="31">
    <source ref="7"/>
</evidence>
<evidence type="ECO:0000269" key="32">
    <source ref="9"/>
</evidence>
<evidence type="ECO:0000303" key="33">
    <source>
    </source>
</evidence>
<evidence type="ECO:0000305" key="34"/>
<evidence type="ECO:0000305" key="35">
    <source>
    </source>
</evidence>
<evidence type="ECO:0000305" key="36">
    <source>
    </source>
</evidence>
<evidence type="ECO:0007744" key="37">
    <source>
    </source>
</evidence>
<evidence type="ECO:0007744" key="38">
    <source>
    </source>
</evidence>
<evidence type="ECO:0007829" key="39">
    <source>
        <dbReference type="PDB" id="4QQ5"/>
    </source>
</evidence>
<evidence type="ECO:0007829" key="40">
    <source>
        <dbReference type="PDB" id="4QQT"/>
    </source>
</evidence>
<evidence type="ECO:0007829" key="41">
    <source>
        <dbReference type="PDB" id="4UXQ"/>
    </source>
</evidence>
<evidence type="ECO:0007829" key="42">
    <source>
        <dbReference type="PDB" id="4XCU"/>
    </source>
</evidence>
<evidence type="ECO:0007829" key="43">
    <source>
        <dbReference type="PDB" id="5XFJ"/>
    </source>
</evidence>
<evidence type="ECO:0007829" key="44">
    <source>
        <dbReference type="PDB" id="6J6Y"/>
    </source>
</evidence>
<evidence type="ECO:0007829" key="45">
    <source>
        <dbReference type="PDB" id="6NVH"/>
    </source>
</evidence>
<evidence type="ECO:0007829" key="46">
    <source>
        <dbReference type="PDB" id="6YI8"/>
    </source>
</evidence>
<evidence type="ECO:0007829" key="47">
    <source>
        <dbReference type="PDB" id="7TYD"/>
    </source>
</evidence>
<evidence type="ECO:0007829" key="48">
    <source>
        <dbReference type="PDB" id="8KH9"/>
    </source>
</evidence>
<reference key="1">
    <citation type="journal article" date="1991" name="EMBO J.">
        <title>FGFR-4, a novel acidic fibroblast growth factor receptor with a distinct expression pattern.</title>
        <authorList>
            <person name="Partanen J.M."/>
            <person name="Maekelae T.P."/>
            <person name="Eerola E."/>
            <person name="Korhonen J."/>
            <person name="Hirvonen H."/>
            <person name="Claesson-Welsh L."/>
            <person name="Alitalo K."/>
        </authorList>
    </citation>
    <scope>NUCLEOTIDE SEQUENCE [MRNA] (ISOFORM 1)</scope>
</reference>
<reference key="2">
    <citation type="journal article" date="1993" name="J. Biol. Chem.">
        <title>Fibroblast growth factor receptor 4 is a high affinity receptor for both acidic and basic fibroblast growth factor but not for keratinocyte growth factor.</title>
        <authorList>
            <person name="Ron D."/>
            <person name="Reich R."/>
            <person name="Chedid M."/>
            <person name="Lengel C."/>
            <person name="Cohen O.E."/>
            <person name="Chan A.M."/>
            <person name="Neufeld G."/>
            <person name="Miki T."/>
            <person name="Tronick S.R."/>
        </authorList>
    </citation>
    <scope>NUCLEOTIDE SEQUENCE [MRNA] (ISOFORM 1)</scope>
    <scope>FUNCTION AS RECEPTOR FOR FGF1 AND FGF2</scope>
    <source>
        <tissue>Mammary gland</tissue>
    </source>
</reference>
<reference key="3">
    <citation type="journal article" date="2000" name="Biochem. Biophys. Res. Commun.">
        <title>Identification of a novel alternative splicing of human FGF receptor 4: soluble-form splice variant expressed in human gastrointestinal epithelial cells.</title>
        <authorList>
            <person name="Takaishi S."/>
            <person name="Sawada M."/>
            <person name="Morita Y."/>
            <person name="Seno H."/>
            <person name="Fukuzawa H."/>
            <person name="Chiba T."/>
        </authorList>
    </citation>
    <scope>NUCLEOTIDE SEQUENCE [MRNA] (ISOFORM 2)</scope>
    <scope>VARIANT LEU-136</scope>
    <scope>TISSUE SPECIFICITY</scope>
    <scope>SUBCELLULAR LOCATION</scope>
    <source>
        <tissue>Intestine</tissue>
    </source>
</reference>
<reference key="4">
    <citation type="journal article" date="1998" name="Mamm. Genome">
        <title>Genomic structure and complete sequence of the human FGFR4 gene.</title>
        <authorList>
            <person name="Kostrzewa M."/>
            <person name="Muller U."/>
        </authorList>
    </citation>
    <scope>NUCLEOTIDE SEQUENCE [GENOMIC DNA]</scope>
</reference>
<reference key="5">
    <citation type="journal article" date="2012" name="Mol. Carcinog.">
        <title>PAX3-FOXO1 and FGFR4 in alveolar rhabdomyosarcoma.</title>
        <authorList>
            <person name="Marshall A.D."/>
            <person name="van der Ent M.A."/>
            <person name="Grosveld G.C."/>
        </authorList>
    </citation>
    <scope>NUCLEOTIDE SEQUENCE [MRNA] (ISOFORM 1)</scope>
    <scope>VARIANTS ILE-10 AND LEU-136</scope>
    <scope>INVOLVEMENT IN CANCER</scope>
    <scope>VARIANT ARG-388</scope>
</reference>
<reference key="6">
    <citation type="submission" date="2002-02" db="EMBL/GenBank/DDBJ databases">
        <title>Sequence variation in fibroblast growth factor receptors 3 and 4.</title>
        <authorList>
            <person name="Lind D.L."/>
            <person name="Cox D.R."/>
        </authorList>
    </citation>
    <scope>NUCLEOTIDE SEQUENCE [GENOMIC DNA]</scope>
    <scope>VARIANT LEU-136</scope>
</reference>
<reference key="7">
    <citation type="submission" date="2007-04" db="EMBL/GenBank/DDBJ databases">
        <authorList>
            <consortium name="NIEHS SNPs program"/>
        </authorList>
    </citation>
    <scope>NUCLEOTIDE SEQUENCE [GENOMIC DNA]</scope>
    <scope>VARIANTS ILE-10; LEU-136 AND ARG-388</scope>
</reference>
<reference key="8">
    <citation type="journal article" date="2004" name="Nature">
        <title>The DNA sequence and comparative analysis of human chromosome 5.</title>
        <authorList>
            <person name="Schmutz J."/>
            <person name="Martin J."/>
            <person name="Terry A."/>
            <person name="Couronne O."/>
            <person name="Grimwood J."/>
            <person name="Lowry S."/>
            <person name="Gordon L.A."/>
            <person name="Scott D."/>
            <person name="Xie G."/>
            <person name="Huang W."/>
            <person name="Hellsten U."/>
            <person name="Tran-Gyamfi M."/>
            <person name="She X."/>
            <person name="Prabhakar S."/>
            <person name="Aerts A."/>
            <person name="Altherr M."/>
            <person name="Bajorek E."/>
            <person name="Black S."/>
            <person name="Branscomb E."/>
            <person name="Caoile C."/>
            <person name="Challacombe J.F."/>
            <person name="Chan Y.M."/>
            <person name="Denys M."/>
            <person name="Detter J.C."/>
            <person name="Escobar J."/>
            <person name="Flowers D."/>
            <person name="Fotopulos D."/>
            <person name="Glavina T."/>
            <person name="Gomez M."/>
            <person name="Gonzales E."/>
            <person name="Goodstein D."/>
            <person name="Grigoriev I."/>
            <person name="Groza M."/>
            <person name="Hammon N."/>
            <person name="Hawkins T."/>
            <person name="Haydu L."/>
            <person name="Israni S."/>
            <person name="Jett J."/>
            <person name="Kadner K."/>
            <person name="Kimball H."/>
            <person name="Kobayashi A."/>
            <person name="Lopez F."/>
            <person name="Lou Y."/>
            <person name="Martinez D."/>
            <person name="Medina C."/>
            <person name="Morgan J."/>
            <person name="Nandkeshwar R."/>
            <person name="Noonan J.P."/>
            <person name="Pitluck S."/>
            <person name="Pollard M."/>
            <person name="Predki P."/>
            <person name="Priest J."/>
            <person name="Ramirez L."/>
            <person name="Retterer J."/>
            <person name="Rodriguez A."/>
            <person name="Rogers S."/>
            <person name="Salamov A."/>
            <person name="Salazar A."/>
            <person name="Thayer N."/>
            <person name="Tice H."/>
            <person name="Tsai M."/>
            <person name="Ustaszewska A."/>
            <person name="Vo N."/>
            <person name="Wheeler J."/>
            <person name="Wu K."/>
            <person name="Yang J."/>
            <person name="Dickson M."/>
            <person name="Cheng J.-F."/>
            <person name="Eichler E.E."/>
            <person name="Olsen A."/>
            <person name="Pennacchio L.A."/>
            <person name="Rokhsar D.S."/>
            <person name="Richardson P."/>
            <person name="Lucas S.M."/>
            <person name="Myers R.M."/>
            <person name="Rubin E.M."/>
        </authorList>
    </citation>
    <scope>NUCLEOTIDE SEQUENCE [LARGE SCALE GENOMIC DNA]</scope>
</reference>
<reference key="9">
    <citation type="submission" date="2005-07" db="EMBL/GenBank/DDBJ databases">
        <authorList>
            <person name="Mural R.J."/>
            <person name="Istrail S."/>
            <person name="Sutton G.G."/>
            <person name="Florea L."/>
            <person name="Halpern A.L."/>
            <person name="Mobarry C.M."/>
            <person name="Lippert R."/>
            <person name="Walenz B."/>
            <person name="Shatkay H."/>
            <person name="Dew I."/>
            <person name="Miller J.R."/>
            <person name="Flanigan M.J."/>
            <person name="Edwards N.J."/>
            <person name="Bolanos R."/>
            <person name="Fasulo D."/>
            <person name="Halldorsson B.V."/>
            <person name="Hannenhalli S."/>
            <person name="Turner R."/>
            <person name="Yooseph S."/>
            <person name="Lu F."/>
            <person name="Nusskern D.R."/>
            <person name="Shue B.C."/>
            <person name="Zheng X.H."/>
            <person name="Zhong F."/>
            <person name="Delcher A.L."/>
            <person name="Huson D.H."/>
            <person name="Kravitz S.A."/>
            <person name="Mouchard L."/>
            <person name="Reinert K."/>
            <person name="Remington K.A."/>
            <person name="Clark A.G."/>
            <person name="Waterman M.S."/>
            <person name="Eichler E.E."/>
            <person name="Adams M.D."/>
            <person name="Hunkapiller M.W."/>
            <person name="Myers E.W."/>
            <person name="Venter J.C."/>
        </authorList>
    </citation>
    <scope>NUCLEOTIDE SEQUENCE [LARGE SCALE GENOMIC DNA]</scope>
    <scope>VARIANT LEU-136</scope>
</reference>
<reference key="10">
    <citation type="journal article" date="2004" name="Genome Res.">
        <title>The status, quality, and expansion of the NIH full-length cDNA project: the Mammalian Gene Collection (MGC).</title>
        <authorList>
            <consortium name="The MGC Project Team"/>
        </authorList>
    </citation>
    <scope>NUCLEOTIDE SEQUENCE [LARGE SCALE MRNA] (ISOFORM 1)</scope>
    <source>
        <tissue>Muscle</tissue>
    </source>
</reference>
<reference key="11">
    <citation type="journal article" date="1990" name="Proc. Natl. Acad. Sci. U.S.A.">
        <title>Putative tyrosine kinases expressed in K-562 human leukemia cells.</title>
        <authorList>
            <person name="Partanen J."/>
            <person name="Maekelae T.P."/>
            <person name="Alitalo R."/>
            <person name="Lehvaeslaiho H."/>
            <person name="Alitalo K."/>
        </authorList>
    </citation>
    <scope>NUCLEOTIDE SEQUENCE [MRNA] OF 609-676</scope>
    <source>
        <tissue>Blood</tissue>
    </source>
</reference>
<reference key="12">
    <citation type="journal article" date="2002" name="J. Clin. Invest.">
        <title>Targeted expression of a human pituitary tumor-derived isoform of FGF receptor-4 recapitulates pituitary tumorigenesis.</title>
        <authorList>
            <person name="Ezzat S."/>
            <person name="Zheng L."/>
            <person name="Zhu X.F."/>
            <person name="Wu G.E."/>
            <person name="Asa S.L."/>
        </authorList>
    </citation>
    <scope>RETRACTED PAPER</scope>
</reference>
<reference key="13">
    <citation type="journal article" date="2015" name="J. Clin. Invest.">
        <authorList>
            <person name="Ezzat S."/>
            <person name="Zheng L."/>
            <person name="Zhu X.F."/>
            <person name="Wu G.E."/>
            <person name="Asa S.L."/>
        </authorList>
    </citation>
    <scope>RETRACTION NOTICE OF PUBMED:11781352</scope>
</reference>
<reference key="14">
    <citation type="journal article" date="2004" name="Protein Sci.">
        <title>Signal peptide prediction based on analysis of experimentally verified cleavage sites.</title>
        <authorList>
            <person name="Zhang Z."/>
            <person name="Henzel W.J."/>
        </authorList>
    </citation>
    <scope>PROTEIN SEQUENCE OF 22-38</scope>
</reference>
<reference key="15">
    <citation type="journal article" date="1994" name="J. Biol. Chem.">
        <title>Signal transduction by fibroblast growth factor receptor-4 (FGFR-4). Comparison with FGFR-1.</title>
        <authorList>
            <person name="Vainikka S."/>
            <person name="Joukov V."/>
            <person name="Wennstrom S."/>
            <person name="Bergman M."/>
            <person name="Pelicci P.G."/>
            <person name="Alitalo K."/>
        </authorList>
    </citation>
    <scope>FUNCTION AS FGF1 RECEPTOR AND IN ACTIVATION OF SIGNALING VIA PLCG1 AND PIK3R1</scope>
    <scope>INTERACTION WITH PLCG1</scope>
    <scope>PHOSPHORYLATION AT TYR-754</scope>
    <scope>MUTAGENESIS OF TYR-754</scope>
</reference>
<reference key="16">
    <citation type="journal article" date="1996" name="J. Biol. Chem.">
        <title>Receptor specificity of the fibroblast growth factor family.</title>
        <authorList>
            <person name="Ornitz D.M."/>
            <person name="Xu J."/>
            <person name="Colvin J.S."/>
            <person name="McEwen D.G."/>
            <person name="MacArthur C.A."/>
            <person name="Coulier F."/>
            <person name="Gao G."/>
            <person name="Goldfarb M."/>
        </authorList>
    </citation>
    <scope>INTERACTION WITH FGF1; FGF2; FGF4; FGF6; FGF8 AND FGF9</scope>
    <scope>FUNCTION IN CELL PROLIFERATION</scope>
</reference>
<reference key="17">
    <citation type="journal article" date="2001" name="Nat. Cell Biol.">
        <title>N-CAM modulates tumour-cell adhesion to matrix by inducing FGF-receptor signalling.</title>
        <authorList>
            <person name="Cavallaro U."/>
            <person name="Niedermeyer J."/>
            <person name="Fuxa M."/>
            <person name="Christofori G."/>
        </authorList>
    </citation>
    <scope>FUNCTION IN CELL DIFFERENTIATION</scope>
    <scope>MUTAGENESIS OF LYS-503</scope>
    <scope>CATALYTIC ACTIVITY</scope>
    <scope>IDENTIFICATION IN A COMPLEX WITH NCAM1; CDH2; PLCG1; FRS2; SRC; SHC; GAP43 AND CTTN</scope>
</reference>
<reference key="18">
    <citation type="journal article" date="2002" name="Cancer Res.">
        <title>Cancer progression and tumor cell motility are associated with the FGFR4 Arg(388) allele.</title>
        <authorList>
            <person name="Bange J."/>
            <person name="Prechtl D."/>
            <person name="Cheburkin Y."/>
            <person name="Specht K."/>
            <person name="Harbeck N."/>
            <person name="Schmitt M."/>
            <person name="Knyazeva T."/>
            <person name="Mueller S."/>
            <person name="Gaertner S."/>
            <person name="Sures I."/>
            <person name="Wang H."/>
            <person name="Imyanitov E."/>
            <person name="Haering H.U."/>
            <person name="Knayzev P."/>
            <person name="Iacobelli S."/>
            <person name="Hoefler H."/>
            <person name="Ullrich A."/>
        </authorList>
    </citation>
    <scope>INVOLVEMENT IN CANCER</scope>
</reference>
<reference key="19">
    <citation type="journal article" date="2006" name="J. Biol. Chem.">
        <title>Receptor specificity of the fibroblast growth factor family. The complete mammalian FGF family.</title>
        <authorList>
            <person name="Zhang X."/>
            <person name="Ibrahimi O.A."/>
            <person name="Olsen S.K."/>
            <person name="Umemori H."/>
            <person name="Mohammadi M."/>
            <person name="Ornitz D.M."/>
        </authorList>
    </citation>
    <scope>INTERACTION WITH FGF1; FGF17; FGF18; FGF19; FGF21 AND FGF23</scope>
    <scope>FUNCTION IN STIMULATION OF CELL PROLIFERATION</scope>
</reference>
<reference key="20">
    <citation type="journal article" date="2007" name="J. Biol. Chem.">
        <title>Tissue-specific expression of betaKlotho and fibroblast growth factor (FGF) receptor isoforms determines metabolic activity of FGF19 and FGF21.</title>
        <authorList>
            <person name="Kurosu H."/>
            <person name="Choi M."/>
            <person name="Ogawa Y."/>
            <person name="Dickson A.S."/>
            <person name="Goetz R."/>
            <person name="Eliseenkova A.V."/>
            <person name="Mohammadi M."/>
            <person name="Rosenblatt K.P."/>
            <person name="Kliewer S.A."/>
            <person name="Kuro-o M."/>
        </authorList>
    </citation>
    <scope>INTERACTION WITH FGF19; FGF21 AND KLB</scope>
    <scope>FUNCTION IN SIGNALING AND IN REGULATION OF CYP7A1 AND BILE ACID SYNTHESIS</scope>
</reference>
<reference key="21">
    <citation type="journal article" date="2007" name="J. Cell. Physiol.">
        <title>Fibroblast growth factor receptor-induced phosphorylation of STAT1 at the Golgi apparatus without translocation to the nucleus.</title>
        <authorList>
            <person name="Citores L."/>
            <person name="Bai L."/>
            <person name="Sorensen V."/>
            <person name="Olsnes S."/>
        </authorList>
    </citation>
    <scope>FUNCTION IN STAT1 PHOSPHORYLATION</scope>
    <scope>CATALYTIC ACTIVITY</scope>
    <scope>MUTAGENESIS OF LYS-503</scope>
    <scope>GLYCOSYLATION</scope>
    <scope>PHOSPHORYLATION</scope>
</reference>
<reference key="22">
    <citation type="journal article" date="2008" name="Int. J. Cancer">
        <title>Polymorphisms of fibroblast growth factor receptor 4 have association with the development of prostate cancer and benign prostatic hyperplasia and the progression of prostate cancer in a Japanese population.</title>
        <authorList>
            <person name="Ma Z."/>
            <person name="Tsuchiya N."/>
            <person name="Yuasa T."/>
            <person name="Inoue T."/>
            <person name="Kumazawa T."/>
            <person name="Narita S."/>
            <person name="Horikawa Y."/>
            <person name="Tsuruta H."/>
            <person name="Obara T."/>
            <person name="Saito M."/>
            <person name="Satoh S."/>
            <person name="Ogawa O."/>
            <person name="Habuchi T."/>
        </authorList>
    </citation>
    <scope>INVOLVEMENT IN CANCER</scope>
    <scope>VARIANT ARG-388</scope>
</reference>
<reference key="23">
    <citation type="journal article" date="2008" name="Mol. Biol. Cell">
        <title>Ubiquitination of fibroblast growth factor receptor 1 is required for its intracellular sorting but not for its endocytosis.</title>
        <authorList>
            <person name="Haugsten E.M."/>
            <person name="Malecki J."/>
            <person name="Bjorklund S.M."/>
            <person name="Olsnes S."/>
            <person name="Wesche J."/>
        </authorList>
    </citation>
    <scope>CATALYTIC ACTIVITY</scope>
    <scope>FUNCTION AS FGF1 RECEPTOR AND IN ACTIVATION OF PLCG1; FRS2; MAPK1/ERK2 AND MAPK3/ERK1</scope>
    <scope>ACTIVITY REGULATION</scope>
    <scope>UBIQUITINATION</scope>
    <scope>SUBCELLULAR LOCATION</scope>
</reference>
<reference key="24">
    <citation type="journal article" date="2008" name="Neoplasia">
        <title>Altered fibroblast growth factor receptor 4 stability promotes prostate cancer progression.</title>
        <authorList>
            <person name="Wang J."/>
            <person name="Yu W."/>
            <person name="Cai Y."/>
            <person name="Ren C."/>
            <person name="Ittmann M.M."/>
        </authorList>
    </citation>
    <scope>CATALYTIC ACTIVITY</scope>
    <scope>FUNCTION AS FGF2 RECEPTOR AND IN STIMULATION OF CELL PROLIFERATION</scope>
    <scope>SUBCELLULAR LOCATION</scope>
    <scope>INTERACTION WITH FGF2 AND HIP1</scope>
    <scope>PHOSPHORYLATION AT TYR-642 AND TYR-643</scope>
    <scope>INVOLVEMENT IN CANCER</scope>
    <scope>CHARACTERIZATION OF VARIANT ARG-388</scope>
</reference>
<reference key="25">
    <citation type="journal article" date="2010" name="Eur. J. Cancer">
        <title>FGFR4 transmembrane domain polymorphism and cancer risk: a meta-analysis including 8555 subjects.</title>
        <authorList>
            <person name="Xu W."/>
            <person name="Li Y."/>
            <person name="Wang X."/>
            <person name="Chen B."/>
            <person name="Wang Y."/>
            <person name="Liu S."/>
            <person name="Xu J."/>
            <person name="Zhao W."/>
            <person name="Wu J."/>
        </authorList>
    </citation>
    <scope>INVOLVEMENT IN CANCER</scope>
</reference>
<reference key="26">
    <citation type="journal article" date="2010" name="Hepatology">
        <title>Glycosylation of fibroblast growth factor receptor 4 is a key regulator of fibroblast growth factor 19-mediated down-regulation of cytochrome P450 7A1.</title>
        <authorList>
            <person name="Triantis V."/>
            <person name="Saeland E."/>
            <person name="Bijl N."/>
            <person name="Oude-Elferink R.P."/>
            <person name="Jansen P.L."/>
        </authorList>
    </citation>
    <scope>FUNCTION IN FGF19 SIGNALING AND IN REGULATION OF BILE ACID SYNTHESIS VIA CYP7A1</scope>
    <scope>INTERACTION WITH FGF19; KL AND KLB</scope>
    <scope>AUTOPHOSPHORYLATION</scope>
    <scope>SUBCELLULAR LOCATION</scope>
    <scope>GLYCOSYLATION</scope>
</reference>
<reference key="27">
    <citation type="journal article" date="2010" name="J. Biol. Chem.">
        <title>FGF19-induced hepatocyte proliferation is mediated through FGFR4 activation.</title>
        <authorList>
            <person name="Wu X."/>
            <person name="Ge H."/>
            <person name="Lemon B."/>
            <person name="Vonderfecht S."/>
            <person name="Weiszmann J."/>
            <person name="Hecht R."/>
            <person name="Gupte J."/>
            <person name="Hager T."/>
            <person name="Wang Z."/>
            <person name="Lindberg R."/>
            <person name="Li Y."/>
        </authorList>
    </citation>
    <scope>FUNCTION IN HEPATOCYTE PROLIFERATION AND FGF19 SIGNALING</scope>
</reference>
<reference key="28">
    <citation type="journal article" date="2010" name="Proc. Natl. Acad. Sci. U.S.A.">
        <title>FGF receptor-4 (FGFR4) polymorphism acts as an activity switch of a membrane type 1 matrix metalloproteinase-FGFR4 complex.</title>
        <authorList>
            <person name="Sugiyama N."/>
            <person name="Varjosalo M."/>
            <person name="Meller P."/>
            <person name="Lohi J."/>
            <person name="Chan K.M."/>
            <person name="Zhou Z."/>
            <person name="Alitalo K."/>
            <person name="Taipale J."/>
            <person name="Keski-Oja J."/>
            <person name="Lehti K."/>
        </authorList>
    </citation>
    <scope>FUNCTION IN DOWN-REGULATION OF MMP14</scope>
    <scope>AUTOPHOSPHORYLATION</scope>
    <scope>INTERACTION WITH MMP14</scope>
</reference>
<reference key="29">
    <citation type="journal article" date="2011" name="BMC Cancer">
        <title>FGFR4 Gly388Arg polymorphism contributes to prostate cancer development and progression: a meta-analysis of 2618 cases and 2305 controls.</title>
        <authorList>
            <person name="Xu B."/>
            <person name="Tong N."/>
            <person name="Chen S.Q."/>
            <person name="Hua L.X."/>
            <person name="Wang Z.J."/>
            <person name="Zhang Z.D."/>
            <person name="Chen M."/>
        </authorList>
    </citation>
    <scope>INVOLVEMENT IN CANCER</scope>
    <scope>VARIANT ARG-388</scope>
</reference>
<reference key="30">
    <citation type="journal article" date="2011" name="BMC Syst. Biol.">
        <title>Initial characterization of the human central proteome.</title>
        <authorList>
            <person name="Burkard T.R."/>
            <person name="Planyavsky M."/>
            <person name="Kaupe I."/>
            <person name="Breitwieser F.P."/>
            <person name="Buerckstuemmer T."/>
            <person name="Bennett K.L."/>
            <person name="Superti-Furga G."/>
            <person name="Colinge J."/>
        </authorList>
    </citation>
    <scope>IDENTIFICATION BY MASS SPECTROMETRY [LARGE SCALE ANALYSIS]</scope>
</reference>
<reference key="31">
    <citation type="journal article" date="2011" name="Eur. J. Cancer Prev.">
        <title>Meta and pooled analyses of FGFR4 Gly388Arg polymorphism as a cancer prognostic factor.</title>
        <authorList>
            <person name="Frullanti E."/>
            <person name="Berking C."/>
            <person name="Harbeck N."/>
            <person name="Jezequel P."/>
            <person name="Haugen A."/>
            <person name="Mawrin C."/>
            <person name="Parise O. Jr."/>
            <person name="Sasaki H."/>
            <person name="Tsuchiya N."/>
            <person name="Dragani T.A."/>
        </authorList>
    </citation>
    <scope>INVOLVEMENT IN CANCER</scope>
</reference>
<reference key="32">
    <citation type="journal article" date="2011" name="J. Biol. Chem.">
        <title>Sulfated glycosaminoglycans are required for specific and sensitive fibroblast growth factor (FGF) 19 signaling via FGF receptor 4 and betaKlotho.</title>
        <authorList>
            <person name="Nakamura M."/>
            <person name="Uehara Y."/>
            <person name="Asada M."/>
            <person name="Honda E."/>
            <person name="Nagai N."/>
            <person name="Kimata K."/>
            <person name="Suzuki M."/>
            <person name="Imamura T."/>
        </authorList>
    </citation>
    <scope>FUNCTION IN FGF19 SIGNALING</scope>
    <scope>FUNCTION IN STIMULATION OF CELL PROLIFERATION AND ACTIVATION OF MAPK1/ERK2 AND MAPK3/ERK1</scope>
    <scope>INTERACTION WITH FGF19; KLB AND SULFATED GLYCOSAMINOGLYCANS</scope>
</reference>
<reference key="33">
    <citation type="journal article" date="2013" name="J. Proteome Res.">
        <title>Toward a comprehensive characterization of a human cancer cell phosphoproteome.</title>
        <authorList>
            <person name="Zhou H."/>
            <person name="Di Palma S."/>
            <person name="Preisinger C."/>
            <person name="Peng M."/>
            <person name="Polat A.N."/>
            <person name="Heck A.J."/>
            <person name="Mohammed S."/>
        </authorList>
    </citation>
    <scope>PHOSPHORYLATION [LARGE SCALE ANALYSIS] AT SER-573</scope>
    <scope>IDENTIFICATION BY MASS SPECTROMETRY [LARGE SCALE ANALYSIS]</scope>
    <source>
        <tissue>Cervix carcinoma</tissue>
    </source>
</reference>
<reference key="34">
    <citation type="journal article" date="2014" name="J. Proteomics">
        <title>An enzyme assisted RP-RPLC approach for in-depth analysis of human liver phosphoproteome.</title>
        <authorList>
            <person name="Bian Y."/>
            <person name="Song C."/>
            <person name="Cheng K."/>
            <person name="Dong M."/>
            <person name="Wang F."/>
            <person name="Huang J."/>
            <person name="Sun D."/>
            <person name="Wang L."/>
            <person name="Ye M."/>
            <person name="Zou H."/>
        </authorList>
    </citation>
    <scope>PHOSPHORYLATION [LARGE SCALE ANALYSIS] AT SER-573</scope>
    <scope>IDENTIFICATION BY MASS SPECTROMETRY [LARGE SCALE ANALYSIS]</scope>
    <source>
        <tissue>Liver</tissue>
    </source>
</reference>
<reference key="35">
    <citation type="journal article" date="2015" name="Nature">
        <title>Germline variant FGFR4 p.G388R exposes a membrane-proximal STAT3 binding site.</title>
        <authorList>
            <person name="Ulaganathan V.K."/>
            <person name="Sperl B."/>
            <person name="Rapp U.R."/>
            <person name="Ullrich A."/>
        </authorList>
    </citation>
    <scope>INTERACTION WITH STAT3</scope>
    <scope>INVOLVEMENT IN CANCER</scope>
    <scope>CHARACTERIZATION OF VARIANT ARG-388</scope>
    <scope>PHOSPHORYLATION AT TYR-390</scope>
</reference>
<reference key="36">
    <citation type="journal article" date="2007" name="Nature">
        <title>Patterns of somatic mutation in human cancer genomes.</title>
        <authorList>
            <person name="Greenman C."/>
            <person name="Stephens P."/>
            <person name="Smith R."/>
            <person name="Dalgliesh G.L."/>
            <person name="Hunter C."/>
            <person name="Bignell G."/>
            <person name="Davies H."/>
            <person name="Teague J."/>
            <person name="Butler A."/>
            <person name="Stevens C."/>
            <person name="Edkins S."/>
            <person name="O'Meara S."/>
            <person name="Vastrik I."/>
            <person name="Schmidt E.E."/>
            <person name="Avis T."/>
            <person name="Barthorpe S."/>
            <person name="Bhamra G."/>
            <person name="Buck G."/>
            <person name="Choudhury B."/>
            <person name="Clements J."/>
            <person name="Cole J."/>
            <person name="Dicks E."/>
            <person name="Forbes S."/>
            <person name="Gray K."/>
            <person name="Halliday K."/>
            <person name="Harrison R."/>
            <person name="Hills K."/>
            <person name="Hinton J."/>
            <person name="Jenkinson A."/>
            <person name="Jones D."/>
            <person name="Menzies A."/>
            <person name="Mironenko T."/>
            <person name="Perry J."/>
            <person name="Raine K."/>
            <person name="Richardson D."/>
            <person name="Shepherd R."/>
            <person name="Small A."/>
            <person name="Tofts C."/>
            <person name="Varian J."/>
            <person name="Webb T."/>
            <person name="West S."/>
            <person name="Widaa S."/>
            <person name="Yates A."/>
            <person name="Cahill D.P."/>
            <person name="Louis D.N."/>
            <person name="Goldstraw P."/>
            <person name="Nicholson A.G."/>
            <person name="Brasseur F."/>
            <person name="Looijenga L."/>
            <person name="Weber B.L."/>
            <person name="Chiew Y.-E."/>
            <person name="DeFazio A."/>
            <person name="Greaves M.F."/>
            <person name="Green A.R."/>
            <person name="Campbell P."/>
            <person name="Birney E."/>
            <person name="Easton D.F."/>
            <person name="Chenevix-Trench G."/>
            <person name="Tan M.-H."/>
            <person name="Khoo S.K."/>
            <person name="Teh B.T."/>
            <person name="Yuen S.T."/>
            <person name="Leung S.Y."/>
            <person name="Wooster R."/>
            <person name="Futreal P.A."/>
            <person name="Stratton M.R."/>
        </authorList>
    </citation>
    <scope>VARIANTS [LARGE SCALE ANALYSIS] ILE-10; LEU-136; ALA-179; SER-426; ASN-516; MET-550; THR-712 AND ASN-772</scope>
</reference>
<reference key="37">
    <citation type="journal article" date="2005" name="Cytokine Growth Factor Rev.">
        <title>Cellular signaling by fibroblast growth factor receptors.</title>
        <authorList>
            <person name="Eswarakumar V.P."/>
            <person name="Lax I."/>
            <person name="Schlessinger J."/>
        </authorList>
    </citation>
    <scope>REVIEW ON LIGAND SELECTIVITY AND SIGNALING</scope>
</reference>
<reference key="38">
    <citation type="journal article" date="2010" name="Nat. Rev. Cancer">
        <title>Fibroblast growth factor signalling: from development to cancer.</title>
        <authorList>
            <person name="Turner N."/>
            <person name="Grose R."/>
        </authorList>
    </citation>
    <scope>REVIEW ON FUNCTION IN FGF SIGNALING</scope>
</reference>
<reference key="39">
    <citation type="journal article" date="2010" name="Cancer Res.">
        <title>Fibroblast growth factor receptor 4 regulates tumor invasion by coupling fibroblast growth factor signaling to extracellular matrix degradation.</title>
        <authorList>
            <person name="Sugiyama N."/>
            <person name="Varjosalo M."/>
            <person name="Meller P."/>
            <person name="Lohi J."/>
            <person name="Hyytiainen M."/>
            <person name="Kilpinen S."/>
            <person name="Kallioniemi O."/>
            <person name="Ingvarsen S."/>
            <person name="Engelholm L.H."/>
            <person name="Taipale J."/>
            <person name="Alitalo K."/>
            <person name="Keski-Oja J."/>
            <person name="Lehti K."/>
        </authorList>
    </citation>
    <scope>CHARACTERIZATION OF VARIANT ARG-388</scope>
    <scope>FUNCTION IN TUMOR CELL INVASION</scope>
</reference>
<comment type="function">
    <text evidence="7 10 11 13 14 15 17 19 20 21 24 27 28 29">Tyrosine-protein kinase that acts as a cell-surface receptor for fibroblast growth factors and plays a role in the regulation of cell proliferation, differentiation and migration, and in regulation of lipid metabolism, bile acid biosynthesis, glucose uptake, vitamin D metabolism and phosphate homeostasis. Required for normal down-regulation of the expression of CYP7A1, the rate-limiting enzyme in bile acid synthesis, in response to FGF19. Phosphorylates PLCG1 and FRS2. Ligand binding leads to the activation of several signaling cascades. Activation of PLCG1 leads to the production of the cellular signaling molecules diacylglycerol and inositol 1,4,5-trisphosphate. Phosphorylation of FRS2 triggers recruitment of GRB2, GAB1, PIK3R1 and SOS1, and mediates activation of RAS, MAPK1/ERK2, MAPK3/ERK1 and the MAP kinase signaling pathway, as well as of the AKT1 signaling pathway. Promotes SRC-dependent phosphorylation of the matrix protease MMP14 and its lysosomal degradation. FGFR4 signaling is down-regulated by receptor internalization and degradation; MMP14 promotes internalization and degradation of FGFR4. Mutations that lead to constitutive kinase activation or impair normal FGFR4 inactivation lead to aberrant signaling.</text>
</comment>
<comment type="catalytic activity">
    <reaction evidence="4 7 11 14 15">
        <text>L-tyrosyl-[protein] + ATP = O-phospho-L-tyrosyl-[protein] + ADP + H(+)</text>
        <dbReference type="Rhea" id="RHEA:10596"/>
        <dbReference type="Rhea" id="RHEA-COMP:10136"/>
        <dbReference type="Rhea" id="RHEA-COMP:20101"/>
        <dbReference type="ChEBI" id="CHEBI:15378"/>
        <dbReference type="ChEBI" id="CHEBI:30616"/>
        <dbReference type="ChEBI" id="CHEBI:46858"/>
        <dbReference type="ChEBI" id="CHEBI:61978"/>
        <dbReference type="ChEBI" id="CHEBI:456216"/>
        <dbReference type="EC" id="2.7.10.1"/>
    </reaction>
</comment>
<comment type="activity regulation">
    <text evidence="14">Present in an inactive conformation in the absence of bound ligand. Ligand binding leads to dimerization and activation by autophosphorylation on tyrosine residues.</text>
</comment>
<comment type="subunit">
    <text evidence="7 10 13 15 19 20 24 26 27 29">Monomer. Homodimer after ligand binding. Interacts with FGF1, FGF2, FGF4, FGF6, FGF8, FGF9, FGF16, FGF17, FGF18, FGF19, FGF21 and FGF23 (in vitro). Binding affinity for FGF family members is enhanced by interactions between FGFs and heparan sulfate proteoglycans. Interacts with KLB; this strongly increases the affinity for FGF19 and FGF23. Affinity for FGF19 is strongly increased by KLB and sulfated glycosaminoglycans. KLB and KL both interact with the core-glycosylated FGFR4 in the endoplasmic reticulum and promote its degradation, so that only FGFR4 with fully mature N-glycans is expressed at the cell surface. Identified in a complex with NCAM1, CDH2, PLCG1, FRS2, SRC, SHC1, GAP43 and CTTN. Interacts with MMP14 and HIP1 (PubMed:11433297, PubMed:16597617, PubMed:17623664, PubMed:18670643, PubMed:20683963, PubMed:20798051, PubMed:21653700, PubMed:7518429, PubMed:8663044). Interacts with STAT3 (PubMed:26675719).</text>
</comment>
<comment type="interaction">
    <interactant intactId="EBI-6256193">
        <id>P22455</id>
    </interactant>
    <interactant intactId="EBI-1028277">
        <id>P11362</id>
        <label>FGFR1</label>
    </interactant>
    <organismsDiffer>false</organismsDiffer>
    <experiments>3</experiments>
</comment>
<comment type="interaction">
    <interactant intactId="EBI-6256193">
        <id>P22455</id>
    </interactant>
    <interactant intactId="EBI-992788">
        <id>P50281</id>
        <label>MMP14</label>
    </interactant>
    <organismsDiffer>false</organismsDiffer>
    <experiments>6</experiments>
</comment>
<comment type="interaction">
    <interactant intactId="EBI-6256193">
        <id>P22455</id>
    </interactant>
    <interactant intactId="EBI-2480756">
        <id>P07949</id>
        <label>RET</label>
    </interactant>
    <organismsDiffer>false</organismsDiffer>
    <experiments>2</experiments>
</comment>
<comment type="subcellular location">
    <subcellularLocation>
        <location>Cell membrane</location>
        <topology>Single-pass type I membrane protein</topology>
    </subcellularLocation>
    <subcellularLocation>
        <location>Endosome</location>
    </subcellularLocation>
    <subcellularLocation>
        <location>Endoplasmic reticulum</location>
    </subcellularLocation>
    <text>Internalized from the cell membrane to recycling endosomes, and from there back to the cell membrane.</text>
</comment>
<comment type="subcellular location">
    <molecule>Isoform 2</molecule>
    <subcellularLocation>
        <location>Secreted</location>
    </subcellularLocation>
</comment>
<comment type="alternative products">
    <event type="alternative splicing"/>
    <isoform>
        <id>P22455-1</id>
        <name>1</name>
        <sequence type="displayed"/>
    </isoform>
    <isoform>
        <id>P22455-2</id>
        <name>2</name>
        <name>Soluble-form</name>
        <sequence type="described" ref="VSP_035108"/>
    </isoform>
</comment>
<comment type="tissue specificity">
    <text evidence="6">Expressed in gastrointestinal epithelial cells, pancreas, and gastric and pancreatic cancer cell lines.</text>
</comment>
<comment type="PTM">
    <text>N-glycosylated. Full maturation of the glycan chains in the Golgi is essential for high affinity interaction with FGF19.</text>
</comment>
<comment type="PTM">
    <text evidence="14">Ubiquitinated. Subject to proteasomal degradation when not fully glycosylated.</text>
</comment>
<comment type="PTM">
    <text evidence="11 15 27">Autophosphorylated. Binding of FGF family members together with heparan sulfate proteoglycan or heparin promotes receptor dimerization and autophosphorylation on tyrosine residues. Autophosphorylation occurs in trans between the two FGFR molecules present in the dimer.</text>
</comment>
<comment type="disease">
    <text evidence="8 15 16 18 21 22 23 25 26">FGFR4 variants may be involved in the pathogenesis of various cancers. Variant Arg-388 predisposes cancer patients to accelerated disease progression and may be associated with poor prognosis. It has been found in prostate cancer as well as cancers of the breast, colon, head and neck, larynx, lung, skin.</text>
</comment>
<comment type="similarity">
    <text evidence="3">Belongs to the protein kinase superfamily. Tyr protein kinase family. Fibroblast growth factor receptor subfamily.</text>
</comment>
<comment type="caution">
    <text evidence="35 36">An additional N-terminally truncated cytoplasmic isoform was previously reported to exist. However, the paper was subsequently retracted due to concerns regarding duplication of panels in some figures.</text>
</comment>
<comment type="online information" name="Atlas of Genetics and Cytogenetics in Oncology and Haematology">
    <link uri="https://atlasgeneticsoncology.org/gene/512/FGFR4"/>
</comment>
<proteinExistence type="evidence at protein level"/>
<gene>
    <name type="primary">FGFR4</name>
    <name type="synonym">JTK2</name>
    <name type="synonym">TKF</name>
</gene>
<sequence>MRLLLALLGVLLSVPGPPVLSLEASEEVELEPCLAPSLEQQEQELTVALGQPVRLCCGRAERGGHWYKEGSRLAPAGRVRGWRGRLEIASFLPEDAGRYLCLARGSMIVLQNLTLITGDSLTSSNDDEDPKSHRDPSNRHSYPQQAPYWTHPQRMEKKLHAVPAGNTVKFRCPAAGNPTPTIRWLKDGQAFHGENRIGGIRLRHQHWSLVMESVVPSDRGTYTCLVENAVGSIRYNYLLDVLERSPHRPILQAGLPANTTAVVGSDVELLCKVYSDAQPHIQWLKHIVINGSSFGADGFPYVQVLKTADINSSEVEVLYLRNVSAEDAGEYTCLAGNSIGLSYQSAWLTVLPEEDPTWTAAAPEARYTDIILYASGSLALAVLLLLAGLYRGQALHGRHPRPPATVQKLSRFPLARQFSLESGSSGKSSSSLVRGVRLSSSGPALLAGLVSLDLPLDPLWEFPRDRLVLGKPLGEGCFGQVVRAEAFGMDPARPDQASTVAVKMLKDNASDKDLADLVSEMEVMKLIGRHKNIINLLGVCTQEGPLYVIVECAAKGNLREFLRARRPPGPDLSPDGPRSSEGPLSFPVLVSCAYQVARGMQYLESRKCIHRDLAARNVLVTEDNVMKIADFGLARGVHHIDYYKKTSNGRLPVKWMAPEALFDRVYTHQSDVWSFGILLWEIFTLGGSPYPGIPVEELFSLLREGHRMDRPPHCPPELYGLMRECWHAAPSQRPTFKQLVEALDKVLLAVSEEYLDLRLTFGPYSPSGGDASSTCSSSDSVFSHDPLPLGSSSFPFGSGVQT</sequence>
<accession>P22455</accession>
<accession>G3JVM2</accession>
<accession>G3JVM5</accession>
<accession>G3JVM7</accession>
<accession>G3JVM9</accession>
<accession>O43785</accession>
<accession>Q14309</accession>
<accession>Q71TW8</accession>
<accession>Q8TDA0</accession>
<accession>Q96KE5</accession>
<feature type="signal peptide" evidence="9">
    <location>
        <begin position="1"/>
        <end position="21"/>
    </location>
</feature>
<feature type="chain" id="PRO_0000016787" description="Fibroblast growth factor receptor 4">
    <location>
        <begin position="22"/>
        <end position="802"/>
    </location>
</feature>
<feature type="topological domain" description="Extracellular" evidence="1">
    <location>
        <begin position="22"/>
        <end position="369"/>
    </location>
</feature>
<feature type="transmembrane region" description="Helical" evidence="1">
    <location>
        <begin position="370"/>
        <end position="390"/>
    </location>
</feature>
<feature type="topological domain" description="Cytoplasmic" evidence="1">
    <location>
        <begin position="391"/>
        <end position="802"/>
    </location>
</feature>
<feature type="domain" description="Ig-like C2-type 1">
    <location>
        <begin position="22"/>
        <end position="118"/>
    </location>
</feature>
<feature type="domain" description="Ig-like C2-type 2">
    <location>
        <begin position="152"/>
        <end position="240"/>
    </location>
</feature>
<feature type="domain" description="Ig-like C2-type 3">
    <location>
        <begin position="249"/>
        <end position="349"/>
    </location>
</feature>
<feature type="domain" description="Protein kinase" evidence="3">
    <location>
        <begin position="467"/>
        <end position="755"/>
    </location>
</feature>
<feature type="region of interest" description="Disordered" evidence="5">
    <location>
        <begin position="119"/>
        <end position="148"/>
    </location>
</feature>
<feature type="active site" description="Proton acceptor" evidence="3 4">
    <location>
        <position position="612"/>
    </location>
</feature>
<feature type="binding site" evidence="3">
    <location>
        <begin position="473"/>
        <end position="481"/>
    </location>
    <ligand>
        <name>ATP</name>
        <dbReference type="ChEBI" id="CHEBI:30616"/>
    </ligand>
</feature>
<feature type="binding site" evidence="3">
    <location>
        <position position="503"/>
    </location>
    <ligand>
        <name>ATP</name>
        <dbReference type="ChEBI" id="CHEBI:30616"/>
    </ligand>
</feature>
<feature type="modified residue" description="Phosphotyrosine; in variant R-388" evidence="26">
    <location>
        <position position="390"/>
    </location>
</feature>
<feature type="modified residue" description="Phosphoserine" evidence="37 38">
    <location>
        <position position="573"/>
    </location>
</feature>
<feature type="modified residue" description="Phosphotyrosine; by autocatalysis" evidence="15">
    <location>
        <position position="642"/>
    </location>
</feature>
<feature type="modified residue" description="Phosphotyrosine; by autocatalysis" evidence="15">
    <location>
        <position position="643"/>
    </location>
</feature>
<feature type="modified residue" description="Phosphotyrosine; by autocatalysis" evidence="27">
    <location>
        <position position="754"/>
    </location>
</feature>
<feature type="glycosylation site" description="N-linked (GlcNAc...) asparagine" evidence="1">
    <location>
        <position position="112"/>
    </location>
</feature>
<feature type="glycosylation site" description="N-linked (GlcNAc...) asparagine" evidence="1">
    <location>
        <position position="258"/>
    </location>
</feature>
<feature type="glycosylation site" description="N-linked (GlcNAc...) asparagine" evidence="1">
    <location>
        <position position="290"/>
    </location>
</feature>
<feature type="glycosylation site" description="N-linked (GlcNAc...) asparagine" evidence="1">
    <location>
        <position position="311"/>
    </location>
</feature>
<feature type="glycosylation site" description="N-linked (GlcNAc...) asparagine" evidence="1">
    <location>
        <position position="322"/>
    </location>
</feature>
<feature type="disulfide bond" evidence="2">
    <location>
        <begin position="57"/>
        <end position="101"/>
    </location>
</feature>
<feature type="disulfide bond" evidence="2">
    <location>
        <begin position="172"/>
        <end position="224"/>
    </location>
</feature>
<feature type="disulfide bond" evidence="2">
    <location>
        <begin position="271"/>
        <end position="333"/>
    </location>
</feature>
<feature type="splice variant" id="VSP_035108" description="In isoform 2." evidence="33">
    <original>EEDPTWTAAAPEARYTDIILYASGSLALAVLLLLAGLYRGQALHGRHPRPPATVQKLSRFPLAR</original>
    <variation>GTGRIPHLTCDSLTPAGRTKSPTL</variation>
    <location>
        <begin position="353"/>
        <end position="416"/>
    </location>
</feature>
<feature type="sequence variant" id="VAR_029185" description="In dbSNP:rs1966265." evidence="12 25 31">
    <original>V</original>
    <variation>I</variation>
    <location>
        <position position="10"/>
    </location>
</feature>
<feature type="sequence variant" id="VAR_042211" description="In dbSNP:rs376618." evidence="6 12 25 30 31 32">
    <original>P</original>
    <variation>L</variation>
    <location>
        <position position="136"/>
    </location>
</feature>
<feature type="sequence variant" id="VAR_042212" description="In dbSNP:rs55675160." evidence="12">
    <original>T</original>
    <variation>A</variation>
    <location>
        <position position="179"/>
    </location>
</feature>
<feature type="sequence variant" id="VAR_014797" description="In cancer cells, may be associated with accelerated disease progression and increased tumor cell motility, possibly due to increased stability of the protease MMP14; leads to phosphorylation at residue Y-390, resulting in prolonged FGFR4 activity; increases interaction with STAT3, resulting in STAT3 phosphorylation and signaling activation.; dbSNP:rs351855." evidence="15 16 21 22 25 26 31">
    <original>G</original>
    <variation>R</variation>
    <location>
        <position position="388"/>
    </location>
</feature>
<feature type="sequence variant" id="VAR_046102" description="In dbSNP:rs55879131." evidence="12">
    <original>G</original>
    <variation>S</variation>
    <location>
        <position position="426"/>
    </location>
</feature>
<feature type="sequence variant" id="VAR_042213" description="In dbSNP:rs34158682." evidence="12">
    <original>D</original>
    <variation>N</variation>
    <location>
        <position position="516"/>
    </location>
</feature>
<feature type="sequence variant" id="VAR_049720" description="In dbSNP:rs34284947.">
    <original>R</original>
    <variation>Q</variation>
    <location>
        <position position="529"/>
    </location>
</feature>
<feature type="sequence variant" id="VAR_046103" description="In breast pleomorphic lobular sample; somatic mutation; dbSNP:rs774571806." evidence="12">
    <original>V</original>
    <variation>M</variation>
    <location>
        <position position="550"/>
    </location>
</feature>
<feature type="sequence variant" id="VAR_046104" description="In a lung adenocarcinoma sample; somatic mutation." evidence="12">
    <original>P</original>
    <variation>T</variation>
    <location>
        <position position="712"/>
    </location>
</feature>
<feature type="sequence variant" id="VAR_046105" description="In a lung neuroendocrine carcinoma sample; somatic mutation." evidence="12">
    <original>S</original>
    <variation>N</variation>
    <location>
        <position position="772"/>
    </location>
</feature>
<feature type="mutagenesis site" description="Loss of kinase activity." evidence="7 11">
    <original>K</original>
    <variation>R</variation>
    <location>
        <position position="503"/>
    </location>
</feature>
<feature type="mutagenesis site" description="Loss of interaction with PLCG1." evidence="27">
    <original>Y</original>
    <variation>F</variation>
    <location>
        <position position="754"/>
    </location>
</feature>
<feature type="sequence conflict" description="In Ref. 3; AAF27432." evidence="34" ref="3">
    <original>L</original>
    <variation>S</variation>
    <location>
        <position position="121"/>
    </location>
</feature>
<feature type="sequence conflict" description="In Ref. 3; AAF27432." evidence="34" ref="3">
    <original>E</original>
    <variation>G</variation>
    <location>
        <position position="194"/>
    </location>
</feature>
<feature type="sequence conflict" description="In Ref. 1; CAA40490." evidence="34" ref="1">
    <original>D</original>
    <variation>V</variation>
    <location>
        <position position="297"/>
    </location>
</feature>
<feature type="strand" evidence="44">
    <location>
        <begin position="145"/>
        <end position="150"/>
    </location>
</feature>
<feature type="helix" evidence="44">
    <location>
        <begin position="152"/>
        <end position="155"/>
    </location>
</feature>
<feature type="strand" evidence="44">
    <location>
        <begin position="159"/>
        <end position="163"/>
    </location>
</feature>
<feature type="strand" evidence="44">
    <location>
        <begin position="168"/>
        <end position="171"/>
    </location>
</feature>
<feature type="strand" evidence="44">
    <location>
        <begin position="174"/>
        <end position="178"/>
    </location>
</feature>
<feature type="strand" evidence="44">
    <location>
        <begin position="181"/>
        <end position="186"/>
    </location>
</feature>
<feature type="strand" evidence="44">
    <location>
        <begin position="201"/>
        <end position="203"/>
    </location>
</feature>
<feature type="turn" evidence="44">
    <location>
        <begin position="204"/>
        <end position="207"/>
    </location>
</feature>
<feature type="strand" evidence="44">
    <location>
        <begin position="208"/>
        <end position="213"/>
    </location>
</feature>
<feature type="helix" evidence="44">
    <location>
        <begin position="216"/>
        <end position="218"/>
    </location>
</feature>
<feature type="strand" evidence="44">
    <location>
        <begin position="220"/>
        <end position="227"/>
    </location>
</feature>
<feature type="strand" evidence="44">
    <location>
        <begin position="232"/>
        <end position="242"/>
    </location>
</feature>
<feature type="strand" evidence="47">
    <location>
        <begin position="259"/>
        <end position="262"/>
    </location>
</feature>
<feature type="strand" evidence="47">
    <location>
        <begin position="267"/>
        <end position="271"/>
    </location>
</feature>
<feature type="strand" evidence="47">
    <location>
        <begin position="280"/>
        <end position="286"/>
    </location>
</feature>
<feature type="strand" evidence="47">
    <location>
        <begin position="292"/>
        <end position="294"/>
    </location>
</feature>
<feature type="strand" evidence="47">
    <location>
        <begin position="296"/>
        <end position="298"/>
    </location>
</feature>
<feature type="strand" evidence="47">
    <location>
        <begin position="302"/>
        <end position="306"/>
    </location>
</feature>
<feature type="strand" evidence="47">
    <location>
        <begin position="316"/>
        <end position="320"/>
    </location>
</feature>
<feature type="helix" evidence="47">
    <location>
        <begin position="325"/>
        <end position="327"/>
    </location>
</feature>
<feature type="strand" evidence="47">
    <location>
        <begin position="329"/>
        <end position="336"/>
    </location>
</feature>
<feature type="strand" evidence="47">
    <location>
        <begin position="341"/>
        <end position="351"/>
    </location>
</feature>
<feature type="helix" evidence="39">
    <location>
        <begin position="445"/>
        <end position="448"/>
    </location>
</feature>
<feature type="turn" evidence="48">
    <location>
        <begin position="458"/>
        <end position="460"/>
    </location>
</feature>
<feature type="helix" evidence="48">
    <location>
        <begin position="464"/>
        <end position="466"/>
    </location>
</feature>
<feature type="strand" evidence="48">
    <location>
        <begin position="467"/>
        <end position="475"/>
    </location>
</feature>
<feature type="strand" evidence="48">
    <location>
        <begin position="480"/>
        <end position="487"/>
    </location>
</feature>
<feature type="strand" evidence="45">
    <location>
        <begin position="489"/>
        <end position="493"/>
    </location>
</feature>
<feature type="strand" evidence="48">
    <location>
        <begin position="497"/>
        <end position="504"/>
    </location>
</feature>
<feature type="helix" evidence="48">
    <location>
        <begin position="511"/>
        <end position="527"/>
    </location>
</feature>
<feature type="strand" evidence="43">
    <location>
        <begin position="531"/>
        <end position="533"/>
    </location>
</feature>
<feature type="strand" evidence="48">
    <location>
        <begin position="536"/>
        <end position="540"/>
    </location>
</feature>
<feature type="strand" evidence="48">
    <location>
        <begin position="542"/>
        <end position="544"/>
    </location>
</feature>
<feature type="strand" evidence="48">
    <location>
        <begin position="547"/>
        <end position="551"/>
    </location>
</feature>
<feature type="helix" evidence="48">
    <location>
        <begin position="558"/>
        <end position="563"/>
    </location>
</feature>
<feature type="turn" evidence="46">
    <location>
        <begin position="570"/>
        <end position="572"/>
    </location>
</feature>
<feature type="turn" evidence="48">
    <location>
        <begin position="577"/>
        <end position="580"/>
    </location>
</feature>
<feature type="helix" evidence="48">
    <location>
        <begin position="586"/>
        <end position="605"/>
    </location>
</feature>
<feature type="helix" evidence="48">
    <location>
        <begin position="615"/>
        <end position="617"/>
    </location>
</feature>
<feature type="strand" evidence="48">
    <location>
        <begin position="618"/>
        <end position="620"/>
    </location>
</feature>
<feature type="strand" evidence="48">
    <location>
        <begin position="626"/>
        <end position="628"/>
    </location>
</feature>
<feature type="turn" evidence="42">
    <location>
        <begin position="631"/>
        <end position="635"/>
    </location>
</feature>
<feature type="helix" evidence="40">
    <location>
        <begin position="637"/>
        <end position="639"/>
    </location>
</feature>
<feature type="strand" evidence="41">
    <location>
        <begin position="642"/>
        <end position="644"/>
    </location>
</feature>
<feature type="helix" evidence="48">
    <location>
        <begin position="652"/>
        <end position="655"/>
    </location>
</feature>
<feature type="helix" evidence="48">
    <location>
        <begin position="658"/>
        <end position="663"/>
    </location>
</feature>
<feature type="helix" evidence="48">
    <location>
        <begin position="668"/>
        <end position="683"/>
    </location>
</feature>
<feature type="strand" evidence="45">
    <location>
        <begin position="689"/>
        <end position="692"/>
    </location>
</feature>
<feature type="helix" evidence="48">
    <location>
        <begin position="695"/>
        <end position="703"/>
    </location>
</feature>
<feature type="helix" evidence="48">
    <location>
        <begin position="716"/>
        <end position="725"/>
    </location>
</feature>
<feature type="helix" evidence="48">
    <location>
        <begin position="730"/>
        <end position="732"/>
    </location>
</feature>
<feature type="helix" evidence="48">
    <location>
        <begin position="736"/>
        <end position="750"/>
    </location>
</feature>